<dbReference type="EMBL" id="U58087">
    <property type="protein sequence ID" value="AAC50544.1"/>
    <property type="molecule type" value="mRNA"/>
</dbReference>
<dbReference type="EMBL" id="AF062536">
    <property type="protein sequence ID" value="AAC36681.1"/>
    <property type="molecule type" value="mRNA"/>
</dbReference>
<dbReference type="EMBL" id="BX537409">
    <property type="protein sequence ID" value="CAD97651.1"/>
    <property type="molecule type" value="mRNA"/>
</dbReference>
<dbReference type="EMBL" id="AC005229">
    <property type="protein sequence ID" value="AAM49153.1"/>
    <property type="molecule type" value="Genomic_DNA"/>
</dbReference>
<dbReference type="EMBL" id="CH471146">
    <property type="protein sequence ID" value="EAW80074.1"/>
    <property type="molecule type" value="Genomic_DNA"/>
</dbReference>
<dbReference type="EMBL" id="BC125119">
    <property type="protein sequence ID" value="AAI25120.1"/>
    <property type="molecule type" value="mRNA"/>
</dbReference>
<dbReference type="EMBL" id="BC125120">
    <property type="protein sequence ID" value="AAI25121.1"/>
    <property type="molecule type" value="mRNA"/>
</dbReference>
<dbReference type="CCDS" id="CCDS34772.1"/>
<dbReference type="RefSeq" id="NP_001357589.1">
    <property type="nucleotide sequence ID" value="NM_001370660.1"/>
</dbReference>
<dbReference type="RefSeq" id="NP_001357590.1">
    <property type="nucleotide sequence ID" value="NM_001370661.1"/>
</dbReference>
<dbReference type="RefSeq" id="NP_001357591.1">
    <property type="nucleotide sequence ID" value="NM_001370662.1"/>
</dbReference>
<dbReference type="RefSeq" id="NP_001357592.1">
    <property type="nucleotide sequence ID" value="NM_001370663.1"/>
</dbReference>
<dbReference type="RefSeq" id="NP_001357593.1">
    <property type="nucleotide sequence ID" value="NM_001370664.1"/>
</dbReference>
<dbReference type="RefSeq" id="NP_003583.2">
    <property type="nucleotide sequence ID" value="NM_003592.2"/>
</dbReference>
<dbReference type="RefSeq" id="XP_005250117.1">
    <property type="nucleotide sequence ID" value="XM_005250060.4"/>
</dbReference>
<dbReference type="RefSeq" id="XP_011514931.1">
    <property type="nucleotide sequence ID" value="XM_011516629.2"/>
</dbReference>
<dbReference type="RefSeq" id="XP_011514932.1">
    <property type="nucleotide sequence ID" value="XM_011516630.2"/>
</dbReference>
<dbReference type="RefSeq" id="XP_011514933.1">
    <property type="nucleotide sequence ID" value="XM_011516631.2"/>
</dbReference>
<dbReference type="RefSeq" id="XP_011514934.1">
    <property type="nucleotide sequence ID" value="XM_011516632.2"/>
</dbReference>
<dbReference type="PDB" id="1LDJ">
    <property type="method" value="X-ray"/>
    <property type="resolution" value="3.00 A"/>
    <property type="chains" value="A=17-776"/>
</dbReference>
<dbReference type="PDB" id="1LDK">
    <property type="method" value="X-ray"/>
    <property type="resolution" value="3.10 A"/>
    <property type="chains" value="A=15-410, B=411-776"/>
</dbReference>
<dbReference type="PDB" id="1U6G">
    <property type="method" value="X-ray"/>
    <property type="resolution" value="3.10 A"/>
    <property type="chains" value="A=1-776"/>
</dbReference>
<dbReference type="PDB" id="3RTR">
    <property type="method" value="X-ray"/>
    <property type="resolution" value="3.21 A"/>
    <property type="chains" value="A/C/E/G=411-776"/>
</dbReference>
<dbReference type="PDB" id="3TDU">
    <property type="method" value="X-ray"/>
    <property type="resolution" value="1.50 A"/>
    <property type="chains" value="C/D=702-776"/>
</dbReference>
<dbReference type="PDB" id="3TDZ">
    <property type="method" value="X-ray"/>
    <property type="resolution" value="2.00 A"/>
    <property type="chains" value="C/D=702-776"/>
</dbReference>
<dbReference type="PDB" id="4F52">
    <property type="method" value="X-ray"/>
    <property type="resolution" value="3.00 A"/>
    <property type="chains" value="A/C=411-690"/>
</dbReference>
<dbReference type="PDB" id="4P5O">
    <property type="method" value="X-ray"/>
    <property type="resolution" value="3.11 A"/>
    <property type="chains" value="A/C=411-776"/>
</dbReference>
<dbReference type="PDB" id="5V89">
    <property type="method" value="X-ray"/>
    <property type="resolution" value="1.55 A"/>
    <property type="chains" value="C=702-776"/>
</dbReference>
<dbReference type="PDB" id="6TTU">
    <property type="method" value="EM"/>
    <property type="resolution" value="3.70 A"/>
    <property type="chains" value="C=1-776"/>
</dbReference>
<dbReference type="PDB" id="6WCQ">
    <property type="method" value="EM"/>
    <property type="resolution" value="8.50 A"/>
    <property type="chains" value="D=1-434"/>
</dbReference>
<dbReference type="PDB" id="7B5L">
    <property type="method" value="EM"/>
    <property type="resolution" value="3.80 A"/>
    <property type="chains" value="C=1-776"/>
</dbReference>
<dbReference type="PDB" id="7B5M">
    <property type="method" value="EM"/>
    <property type="resolution" value="3.91 A"/>
    <property type="chains" value="C=1-776"/>
</dbReference>
<dbReference type="PDB" id="7B5N">
    <property type="method" value="EM"/>
    <property type="resolution" value="3.60 A"/>
    <property type="chains" value="C=1-776"/>
</dbReference>
<dbReference type="PDB" id="7B5R">
    <property type="method" value="EM"/>
    <property type="resolution" value="3.80 A"/>
    <property type="chains" value="C=1-776"/>
</dbReference>
<dbReference type="PDB" id="7B5S">
    <property type="method" value="EM"/>
    <property type="resolution" value="3.60 A"/>
    <property type="chains" value="C=1-776"/>
</dbReference>
<dbReference type="PDB" id="7Z8R">
    <property type="method" value="EM"/>
    <property type="resolution" value="2.70 A"/>
    <property type="chains" value="C=1-776"/>
</dbReference>
<dbReference type="PDB" id="7Z8T">
    <property type="method" value="EM"/>
    <property type="resolution" value="3.00 A"/>
    <property type="chains" value="C=1-776"/>
</dbReference>
<dbReference type="PDB" id="7Z8V">
    <property type="method" value="EM"/>
    <property type="resolution" value="2.70 A"/>
    <property type="chains" value="C=1-776"/>
</dbReference>
<dbReference type="PDB" id="7ZBW">
    <property type="method" value="EM"/>
    <property type="resolution" value="3.50 A"/>
    <property type="chains" value="C=1-776"/>
</dbReference>
<dbReference type="PDB" id="7ZBZ">
    <property type="method" value="EM"/>
    <property type="resolution" value="3.10 A"/>
    <property type="chains" value="C=1-776"/>
</dbReference>
<dbReference type="PDB" id="8CAF">
    <property type="method" value="X-ray"/>
    <property type="resolution" value="2.66 A"/>
    <property type="chains" value="E/H=698-776"/>
</dbReference>
<dbReference type="PDB" id="8CDJ">
    <property type="method" value="EM"/>
    <property type="resolution" value="3.40 A"/>
    <property type="chains" value="C=1-776"/>
</dbReference>
<dbReference type="PDB" id="8CDK">
    <property type="method" value="EM"/>
    <property type="resolution" value="3.32 A"/>
    <property type="chains" value="C=1-776"/>
</dbReference>
<dbReference type="PDB" id="8OR0">
    <property type="method" value="EM"/>
    <property type="resolution" value="3.10 A"/>
    <property type="chains" value="A=1-776"/>
</dbReference>
<dbReference type="PDB" id="8OR2">
    <property type="method" value="EM"/>
    <property type="resolution" value="3.20 A"/>
    <property type="chains" value="A=1-776"/>
</dbReference>
<dbReference type="PDB" id="8OR3">
    <property type="method" value="EM"/>
    <property type="resolution" value="2.90 A"/>
    <property type="chains" value="A=1-776"/>
</dbReference>
<dbReference type="PDB" id="8OR4">
    <property type="method" value="EM"/>
    <property type="resolution" value="3.80 A"/>
    <property type="chains" value="A=1-776"/>
</dbReference>
<dbReference type="PDB" id="8UA6">
    <property type="method" value="EM"/>
    <property type="resolution" value="3.90 A"/>
    <property type="chains" value="A=13-776"/>
</dbReference>
<dbReference type="PDB" id="8UBT">
    <property type="method" value="EM"/>
    <property type="resolution" value="3.10 A"/>
    <property type="chains" value="A=13-776"/>
</dbReference>
<dbReference type="PDB" id="8UBU">
    <property type="method" value="EM"/>
    <property type="resolution" value="4.60 A"/>
    <property type="chains" value="A/H=13-776"/>
</dbReference>
<dbReference type="PDB" id="8VVY">
    <property type="method" value="EM"/>
    <property type="resolution" value="3.49 A"/>
    <property type="chains" value="A=13-776"/>
</dbReference>
<dbReference type="PDB" id="9JKB">
    <property type="method" value="EM"/>
    <property type="resolution" value="3.93 A"/>
    <property type="chains" value="A=2-776"/>
</dbReference>
<dbReference type="PDB" id="9KBD">
    <property type="method" value="EM"/>
    <property type="resolution" value="3.70 A"/>
    <property type="chains" value="A=1-776"/>
</dbReference>
<dbReference type="PDBsum" id="1LDJ"/>
<dbReference type="PDBsum" id="1LDK"/>
<dbReference type="PDBsum" id="1U6G"/>
<dbReference type="PDBsum" id="3RTR"/>
<dbReference type="PDBsum" id="3TDU"/>
<dbReference type="PDBsum" id="3TDZ"/>
<dbReference type="PDBsum" id="4F52"/>
<dbReference type="PDBsum" id="4P5O"/>
<dbReference type="PDBsum" id="5V89"/>
<dbReference type="PDBsum" id="6TTU"/>
<dbReference type="PDBsum" id="6WCQ"/>
<dbReference type="PDBsum" id="7B5L"/>
<dbReference type="PDBsum" id="7B5M"/>
<dbReference type="PDBsum" id="7B5N"/>
<dbReference type="PDBsum" id="7B5R"/>
<dbReference type="PDBsum" id="7B5S"/>
<dbReference type="PDBsum" id="7Z8R"/>
<dbReference type="PDBsum" id="7Z8T"/>
<dbReference type="PDBsum" id="7Z8V"/>
<dbReference type="PDBsum" id="7ZBW"/>
<dbReference type="PDBsum" id="7ZBZ"/>
<dbReference type="PDBsum" id="8CAF"/>
<dbReference type="PDBsum" id="8CDJ"/>
<dbReference type="PDBsum" id="8CDK"/>
<dbReference type="PDBsum" id="8OR0"/>
<dbReference type="PDBsum" id="8OR2"/>
<dbReference type="PDBsum" id="8OR3"/>
<dbReference type="PDBsum" id="8OR4"/>
<dbReference type="PDBsum" id="8UA6"/>
<dbReference type="PDBsum" id="8UBT"/>
<dbReference type="PDBsum" id="8UBU"/>
<dbReference type="PDBsum" id="8VVY"/>
<dbReference type="PDBsum" id="9JKB"/>
<dbReference type="PDBsum" id="9KBD"/>
<dbReference type="EMDB" id="EMD-10585"/>
<dbReference type="EMDB" id="EMD-12037"/>
<dbReference type="EMDB" id="EMD-12040"/>
<dbReference type="EMDB" id="EMD-12041"/>
<dbReference type="EMDB" id="EMD-12048"/>
<dbReference type="EMDB" id="EMD-12050"/>
<dbReference type="EMDB" id="EMD-14561"/>
<dbReference type="EMDB" id="EMD-14563"/>
<dbReference type="EMDB" id="EMD-14564"/>
<dbReference type="EMDB" id="EMD-14594"/>
<dbReference type="EMDB" id="EMD-14597"/>
<dbReference type="EMDB" id="EMD-16575"/>
<dbReference type="EMDB" id="EMD-16576"/>
<dbReference type="EMDB" id="EMD-17114"/>
<dbReference type="EMDB" id="EMD-17115"/>
<dbReference type="EMDB" id="EMD-17116"/>
<dbReference type="EMDB" id="EMD-17117"/>
<dbReference type="EMDB" id="EMD-21617"/>
<dbReference type="EMDB" id="EMD-3401"/>
<dbReference type="EMDB" id="EMD-42051"/>
<dbReference type="EMDB" id="EMD-42102"/>
<dbReference type="EMDB" id="EMD-42105"/>
<dbReference type="EMDB" id="EMD-43572"/>
<dbReference type="EMDB" id="EMD-61550"/>
<dbReference type="EMDB" id="EMD-62222"/>
<dbReference type="SMR" id="Q13616"/>
<dbReference type="BioGRID" id="114032">
    <property type="interactions" value="934"/>
</dbReference>
<dbReference type="ComplexPortal" id="CPX-2239">
    <property type="entry name" value="SCF E3 ubiquitin ligase complex, FBXL5 variant"/>
</dbReference>
<dbReference type="ComplexPortal" id="CPX-2241">
    <property type="entry name" value="SCF E3 ubiquitin ligase complex, FBXL13 variant"/>
</dbReference>
<dbReference type="ComplexPortal" id="CPX-2319">
    <property type="entry name" value="SCF E3 ubiquitin ligase complex, FBXL14 variant"/>
</dbReference>
<dbReference type="ComplexPortal" id="CPX-2343">
    <property type="entry name" value="SCF E3 ubiquitin ligase complex, FBXL16 variant"/>
</dbReference>
<dbReference type="ComplexPortal" id="CPX-2365">
    <property type="entry name" value="SCF E3 ubiquitin ligase complex, BTRC variant"/>
</dbReference>
<dbReference type="ComplexPortal" id="CPX-2438">
    <property type="entry name" value="SCF E3 ubiquitin ligase complex, FBXL8 variant"/>
</dbReference>
<dbReference type="ComplexPortal" id="CPX-2489">
    <property type="entry name" value="SCF E3 ubiquitin ligase complex, FBXL22 variant"/>
</dbReference>
<dbReference type="ComplexPortal" id="CPX-2492">
    <property type="entry name" value="SCF E3 ubiquitin ligase complex, FBXL15 variant"/>
</dbReference>
<dbReference type="ComplexPortal" id="CPX-2512">
    <property type="entry name" value="SCF E3 ubiquitin ligase complex, FBXL4 variant"/>
</dbReference>
<dbReference type="ComplexPortal" id="CPX-2516">
    <property type="entry name" value="SCF E3 ubiquitin ligase complex, FBXL6 variant"/>
</dbReference>
<dbReference type="ComplexPortal" id="CPX-2538">
    <property type="entry name" value="SCF E3 ubiquitin ligase complex, KDM2A variant"/>
</dbReference>
<dbReference type="ComplexPortal" id="CPX-2553">
    <property type="entry name" value="SCF E3 ubiquitin ligase complex, FBXL18 variant"/>
</dbReference>
<dbReference type="ComplexPortal" id="CPX-2554">
    <property type="entry name" value="SCF E3 ubiquitin ligase complex, FBXL19 variant"/>
</dbReference>
<dbReference type="ComplexPortal" id="CPX-2658">
    <property type="entry name" value="SCF E3 ubiquitin ligase complex, FBXL12 variant"/>
</dbReference>
<dbReference type="ComplexPortal" id="CPX-2683">
    <property type="entry name" value="SCF E3 ubiquitin ligase complex, FBXL7 variant"/>
</dbReference>
<dbReference type="ComplexPortal" id="CPX-2748">
    <property type="entry name" value="SCF E3 ubiquitin ligase complex, FBXL21 variant"/>
</dbReference>
<dbReference type="ComplexPortal" id="CPX-2773">
    <property type="entry name" value="SCF E3 ubiquitin ligase complex, FBXL17 variant"/>
</dbReference>
<dbReference type="ComplexPortal" id="CPX-2832">
    <property type="entry name" value="SCF E3 ubiquitin ligase complex, KDM2B variant"/>
</dbReference>
<dbReference type="ComplexPortal" id="CPX-2873">
    <property type="entry name" value="SCF E3 ubiquitin ligase complex, FBXL20 variant"/>
</dbReference>
<dbReference type="ComplexPortal" id="CPX-3291">
    <property type="entry name" value="SCF E3 ubiquitin ligase complex, FBXL3 variant"/>
</dbReference>
<dbReference type="ComplexPortal" id="CPX-3292">
    <property type="entry name" value="SCF E3 ubiquitin ligase complex, FBXL2 variant"/>
</dbReference>
<dbReference type="ComplexPortal" id="CPX-3295">
    <property type="entry name" value="SCF E3 ubiquitin ligase complex, SKP2 variant"/>
</dbReference>
<dbReference type="ComplexPortal" id="CPX-7747">
    <property type="entry name" value="SCF E3 ubiquitin ligase complex, FBXW2 variant"/>
</dbReference>
<dbReference type="ComplexPortal" id="CPX-7761">
    <property type="entry name" value="SCF E3 ubiquitin ligase complex, FBXW4 variant"/>
</dbReference>
<dbReference type="ComplexPortal" id="CPX-7762">
    <property type="entry name" value="SCF E3 ubiquitin ligase complex, FBXW5 variant"/>
</dbReference>
<dbReference type="ComplexPortal" id="CPX-7763">
    <property type="entry name" value="SCF E3 ubiquitin ligase complex, FBXW7 variant"/>
</dbReference>
<dbReference type="ComplexPortal" id="CPX-7784">
    <property type="entry name" value="SCF E3 ubiquitin ligase complex, FBXW8-CUL7 variant"/>
</dbReference>
<dbReference type="ComplexPortal" id="CPX-7785">
    <property type="entry name" value="SCF E3 ubiquitin ligase complex, FBXW9 variant"/>
</dbReference>
<dbReference type="ComplexPortal" id="CPX-7786">
    <property type="entry name" value="SCF E3 ubiquitin ligase complex, FBXW10 variant"/>
</dbReference>
<dbReference type="ComplexPortal" id="CPX-7821">
    <property type="entry name" value="SCF E3 ubiquitin ligase complex, FBXW11 variant"/>
</dbReference>
<dbReference type="ComplexPortal" id="CPX-7822">
    <property type="entry name" value="SCF E3 ubiquitin ligase complex, FBXW12 variant"/>
</dbReference>
<dbReference type="ComplexPortal" id="CPX-7846">
    <property type="entry name" value="SCF E3 ubiquitin ligase complex, CCNF variant"/>
</dbReference>
<dbReference type="ComplexPortal" id="CPX-7847">
    <property type="entry name" value="SCF E3 ubiquitin ligase complex, FBXO2 variant"/>
</dbReference>
<dbReference type="ComplexPortal" id="CPX-7881">
    <property type="entry name" value="SCF E3 ubiquitin ligase complex, FBXO3 variant"/>
</dbReference>
<dbReference type="ComplexPortal" id="CPX-7882">
    <property type="entry name" value="SCF E3 ubiquitin ligase complex, FBXO4 variant"/>
</dbReference>
<dbReference type="ComplexPortal" id="CPX-7904">
    <property type="entry name" value="SCF E3 ubiquitin ligase complex, FBXO5 variant"/>
</dbReference>
<dbReference type="ComplexPortal" id="CPX-7905">
    <property type="entry name" value="SCF E3 ubiquitin ligase complex, FBXO6 variant"/>
</dbReference>
<dbReference type="ComplexPortal" id="CPX-7906">
    <property type="entry name" value="SCF E3 ubiquitin ligase complex, FBXO7 variant"/>
</dbReference>
<dbReference type="ComplexPortal" id="CPX-7921">
    <property type="entry name" value="SCF E3 ubiquitin ligase complex, FBXO8 variant"/>
</dbReference>
<dbReference type="ComplexPortal" id="CPX-7922">
    <property type="entry name" value="SCF E3 ubiquitin ligase complex, FBXO9 variant"/>
</dbReference>
<dbReference type="ComplexPortal" id="CPX-7923">
    <property type="entry name" value="SCF E3 ubiquitin ligase complex, FBXO10 variant"/>
</dbReference>
<dbReference type="ComplexPortal" id="CPX-7924">
    <property type="entry name" value="SCF E3 ubiquitin ligase complex, FBXO11 variant"/>
</dbReference>
<dbReference type="ComplexPortal" id="CPX-7925">
    <property type="entry name" value="SCF E3 ubiquitin ligase complex, FBXO15 variant"/>
</dbReference>
<dbReference type="ComplexPortal" id="CPX-7926">
    <property type="entry name" value="SCF E3 ubiquitin ligase complex, FBXO16 variant"/>
</dbReference>
<dbReference type="ComplexPortal" id="CPX-7927">
    <property type="entry name" value="SCF E3 ubiquitin ligase complex, FBXO17 variant"/>
</dbReference>
<dbReference type="ComplexPortal" id="CPX-7928">
    <property type="entry name" value="SCF E3 ubiquitin ligase complex, FBH1 variant"/>
</dbReference>
<dbReference type="ComplexPortal" id="CPX-7929">
    <property type="entry name" value="SCF E3 ubiquitin ligase complex, LMO7 variant"/>
</dbReference>
<dbReference type="ComplexPortal" id="CPX-7930">
    <property type="entry name" value="SCF E3 ubiquitin ligase complex, FBXO21 variant"/>
</dbReference>
<dbReference type="ComplexPortal" id="CPX-7962">
    <property type="entry name" value="SCF E3 ubiquitin ligase complex, FBXO22 variant"/>
</dbReference>
<dbReference type="ComplexPortal" id="CPX-7963">
    <property type="entry name" value="SCF E3 ubiquitin ligase complex, FBXO24 variant"/>
</dbReference>
<dbReference type="ComplexPortal" id="CPX-7965">
    <property type="entry name" value="SCF E3 ubiquitin ligase complex, FBXO25 variant"/>
</dbReference>
<dbReference type="ComplexPortal" id="CPX-7966">
    <property type="entry name" value="SCF E3 ubiquitin ligase complex, FBXO27 variant"/>
</dbReference>
<dbReference type="ComplexPortal" id="CPX-7967">
    <property type="entry name" value="SCF E3 ubiquitin ligase complex, FBXO28 variant"/>
</dbReference>
<dbReference type="ComplexPortal" id="CPX-7968">
    <property type="entry name" value="SCF E3 ubiquitin ligase complex, FBXO30 variant"/>
</dbReference>
<dbReference type="ComplexPortal" id="CPX-7971">
    <property type="entry name" value="SCF E3 ubiquitin ligase complex, FBXO31 variant"/>
</dbReference>
<dbReference type="ComplexPortal" id="CPX-7972">
    <property type="entry name" value="SCF E3 ubiquitin ligase complex, FBXO32 variant"/>
</dbReference>
<dbReference type="ComplexPortal" id="CPX-7973">
    <property type="entry name" value="SCF E3 ubiquitin ligase complex, FBXO33 variant"/>
</dbReference>
<dbReference type="ComplexPortal" id="CPX-7975">
    <property type="entry name" value="SCF E3 ubiquitin ligase complex, FBXO34 variant"/>
</dbReference>
<dbReference type="ComplexPortal" id="CPX-7976">
    <property type="entry name" value="SCF E3 ubiquitin ligase complex, FBXO36 variant"/>
</dbReference>
<dbReference type="ComplexPortal" id="CPX-7977">
    <property type="entry name" value="SCF E3 ubiquitin ligase complex, FBXO38 variant"/>
</dbReference>
<dbReference type="ComplexPortal" id="CPX-7979">
    <property type="entry name" value="SCF E3 ubiquitin ligase complex, FBXO39 variant"/>
</dbReference>
<dbReference type="ComplexPortal" id="CPX-7981">
    <property type="entry name" value="SCF E3 ubiquitin ligase complex, FBXO40 variant"/>
</dbReference>
<dbReference type="ComplexPortal" id="CPX-7982">
    <property type="entry name" value="SCF E3 ubiquitin ligase complex, FBXO41 variant"/>
</dbReference>
<dbReference type="ComplexPortal" id="CPX-7983">
    <property type="entry name" value="SCF E3 ubiquitin ligase complex, FBXO42 variant"/>
</dbReference>
<dbReference type="ComplexPortal" id="CPX-8002">
    <property type="entry name" value="SCF E3 ubiquitin ligase complex, FBXO43 variant"/>
</dbReference>
<dbReference type="ComplexPortal" id="CPX-8003">
    <property type="entry name" value="SCF E3 ubiquitin ligase complex, FBXO44 variant"/>
</dbReference>
<dbReference type="ComplexPortal" id="CPX-8005">
    <property type="entry name" value="SCF E3 ubiquitin ligase complex, FBXO46 variant"/>
</dbReference>
<dbReference type="ComplexPortal" id="CPX-8006">
    <property type="entry name" value="SCF E3 ubiquitin ligase complex, FBXO47 variant"/>
</dbReference>
<dbReference type="ComplexPortal" id="CPX-8108">
    <property type="entry name" value="SCF E3 ubiquitin ligase complex, TSPAN17 variant"/>
</dbReference>
<dbReference type="CORUM" id="Q13616"/>
<dbReference type="DIP" id="DIP-17013N"/>
<dbReference type="FunCoup" id="Q13616">
    <property type="interactions" value="3235"/>
</dbReference>
<dbReference type="IntAct" id="Q13616">
    <property type="interactions" value="592"/>
</dbReference>
<dbReference type="MINT" id="Q13616"/>
<dbReference type="STRING" id="9606.ENSP00000326804"/>
<dbReference type="BindingDB" id="Q13616"/>
<dbReference type="ChEMBL" id="CHEMBL3758068"/>
<dbReference type="GlyGen" id="Q13616">
    <property type="glycosylation" value="1 site, 1 O-linked glycan (1 site)"/>
</dbReference>
<dbReference type="iPTMnet" id="Q13616"/>
<dbReference type="MetOSite" id="Q13616"/>
<dbReference type="PhosphoSitePlus" id="Q13616"/>
<dbReference type="BioMuta" id="CUL1"/>
<dbReference type="DMDM" id="19863257"/>
<dbReference type="jPOST" id="Q13616"/>
<dbReference type="MassIVE" id="Q13616"/>
<dbReference type="PaxDb" id="9606-ENSP00000326804"/>
<dbReference type="PeptideAtlas" id="Q13616"/>
<dbReference type="ProteomicsDB" id="59604"/>
<dbReference type="Pumba" id="Q13616"/>
<dbReference type="Antibodypedia" id="3630">
    <property type="antibodies" value="546 antibodies from 42 providers"/>
</dbReference>
<dbReference type="DNASU" id="8454"/>
<dbReference type="Ensembl" id="ENST00000325222.9">
    <property type="protein sequence ID" value="ENSP00000326804.3"/>
    <property type="gene ID" value="ENSG00000055130.18"/>
</dbReference>
<dbReference type="Ensembl" id="ENST00000409469.5">
    <property type="protein sequence ID" value="ENSP00000387160.1"/>
    <property type="gene ID" value="ENSG00000055130.18"/>
</dbReference>
<dbReference type="Ensembl" id="ENST00000602748.5">
    <property type="protein sequence ID" value="ENSP00000473318.1"/>
    <property type="gene ID" value="ENSG00000055130.18"/>
</dbReference>
<dbReference type="Ensembl" id="ENST00000662716.1">
    <property type="protein sequence ID" value="ENSP00000499277.1"/>
    <property type="gene ID" value="ENSG00000055130.18"/>
</dbReference>
<dbReference type="Ensembl" id="ENST00000663044.1">
    <property type="protein sequence ID" value="ENSP00000499398.1"/>
    <property type="gene ID" value="ENSG00000055130.18"/>
</dbReference>
<dbReference type="Ensembl" id="ENST00000665936.1">
    <property type="protein sequence ID" value="ENSP00000499255.1"/>
    <property type="gene ID" value="ENSG00000055130.18"/>
</dbReference>
<dbReference type="GeneID" id="8454"/>
<dbReference type="KEGG" id="hsa:8454"/>
<dbReference type="MANE-Select" id="ENST00000325222.9">
    <property type="protein sequence ID" value="ENSP00000326804.3"/>
    <property type="RefSeq nucleotide sequence ID" value="NM_003592.3"/>
    <property type="RefSeq protein sequence ID" value="NP_003583.2"/>
</dbReference>
<dbReference type="UCSC" id="uc003wey.4">
    <property type="organism name" value="human"/>
</dbReference>
<dbReference type="AGR" id="HGNC:2551"/>
<dbReference type="CTD" id="8454"/>
<dbReference type="DisGeNET" id="8454"/>
<dbReference type="GeneCards" id="CUL1"/>
<dbReference type="HGNC" id="HGNC:2551">
    <property type="gene designation" value="CUL1"/>
</dbReference>
<dbReference type="HPA" id="ENSG00000055130">
    <property type="expression patterns" value="Low tissue specificity"/>
</dbReference>
<dbReference type="MalaCards" id="CUL1"/>
<dbReference type="MIM" id="603134">
    <property type="type" value="gene"/>
</dbReference>
<dbReference type="neXtProt" id="NX_Q13616"/>
<dbReference type="OpenTargets" id="ENSG00000055130"/>
<dbReference type="PharmGKB" id="PA27047"/>
<dbReference type="VEuPathDB" id="HostDB:ENSG00000055130"/>
<dbReference type="eggNOG" id="KOG2166">
    <property type="taxonomic scope" value="Eukaryota"/>
</dbReference>
<dbReference type="GeneTree" id="ENSGT00940000154774"/>
<dbReference type="InParanoid" id="Q13616"/>
<dbReference type="OMA" id="IREWDRY"/>
<dbReference type="OrthoDB" id="27073at2759"/>
<dbReference type="PAN-GO" id="Q13616">
    <property type="GO annotations" value="5 GO annotations based on evolutionary models"/>
</dbReference>
<dbReference type="PhylomeDB" id="Q13616"/>
<dbReference type="TreeFam" id="TF101151"/>
<dbReference type="BioCyc" id="MetaCyc:ENSG00000055130-MONOMER"/>
<dbReference type="PathwayCommons" id="Q13616"/>
<dbReference type="Reactome" id="R-HSA-1169091">
    <property type="pathway name" value="Activation of NF-kappaB in B cells"/>
</dbReference>
<dbReference type="Reactome" id="R-HSA-1170546">
    <property type="pathway name" value="Prolactin receptor signaling"/>
</dbReference>
<dbReference type="Reactome" id="R-HSA-174113">
    <property type="pathway name" value="SCF-beta-TrCP mediated degradation of Emi1"/>
</dbReference>
<dbReference type="Reactome" id="R-HSA-187577">
    <property type="pathway name" value="SCF(Skp2)-mediated degradation of p27/p21"/>
</dbReference>
<dbReference type="Reactome" id="R-HSA-195253">
    <property type="pathway name" value="Degradation of beta-catenin by the destruction complex"/>
</dbReference>
<dbReference type="Reactome" id="R-HSA-202424">
    <property type="pathway name" value="Downstream TCR signaling"/>
</dbReference>
<dbReference type="Reactome" id="R-HSA-2122947">
    <property type="pathway name" value="NOTCH1 Intracellular Domain Regulates Transcription"/>
</dbReference>
<dbReference type="Reactome" id="R-HSA-2565942">
    <property type="pathway name" value="Regulation of PLK1 Activity at G2/M Transition"/>
</dbReference>
<dbReference type="Reactome" id="R-HSA-2644606">
    <property type="pathway name" value="Constitutive Signaling by NOTCH1 PEST Domain Mutants"/>
</dbReference>
<dbReference type="Reactome" id="R-HSA-2644607">
    <property type="pathway name" value="Loss of Function of FBXW7 in Cancer and NOTCH1 Signaling"/>
</dbReference>
<dbReference type="Reactome" id="R-HSA-2871837">
    <property type="pathway name" value="FCERI mediated NF-kB activation"/>
</dbReference>
<dbReference type="Reactome" id="R-HSA-2894862">
    <property type="pathway name" value="Constitutive Signaling by NOTCH1 HD+PEST Domain Mutants"/>
</dbReference>
<dbReference type="Reactome" id="R-HSA-400253">
    <property type="pathway name" value="Circadian Clock"/>
</dbReference>
<dbReference type="Reactome" id="R-HSA-5607761">
    <property type="pathway name" value="Dectin-1 mediated noncanonical NF-kB signaling"/>
</dbReference>
<dbReference type="Reactome" id="R-HSA-5607764">
    <property type="pathway name" value="CLEC7A (Dectin-1) signaling"/>
</dbReference>
<dbReference type="Reactome" id="R-HSA-5610780">
    <property type="pathway name" value="Degradation of GLI1 by the proteasome"/>
</dbReference>
<dbReference type="Reactome" id="R-HSA-5610783">
    <property type="pathway name" value="Degradation of GLI2 by the proteasome"/>
</dbReference>
<dbReference type="Reactome" id="R-HSA-5610785">
    <property type="pathway name" value="GLI3 is processed to GLI3R by the proteasome"/>
</dbReference>
<dbReference type="Reactome" id="R-HSA-5676590">
    <property type="pathway name" value="NIK--&gt;noncanonical NF-kB signaling"/>
</dbReference>
<dbReference type="Reactome" id="R-HSA-5684264">
    <property type="pathway name" value="MAP3K8 (TPL2)-dependent MAPK1/3 activation"/>
</dbReference>
<dbReference type="Reactome" id="R-HSA-68949">
    <property type="pathway name" value="Orc1 removal from chromatin"/>
</dbReference>
<dbReference type="Reactome" id="R-HSA-69231">
    <property type="pathway name" value="Cyclin D associated events in G1"/>
</dbReference>
<dbReference type="Reactome" id="R-HSA-8854050">
    <property type="pathway name" value="FBXL7 down-regulates AURKA during mitotic entry and in early mitosis"/>
</dbReference>
<dbReference type="Reactome" id="R-HSA-8939902">
    <property type="pathway name" value="Regulation of RUNX2 expression and activity"/>
</dbReference>
<dbReference type="Reactome" id="R-HSA-8951664">
    <property type="pathway name" value="Neddylation"/>
</dbReference>
<dbReference type="Reactome" id="R-HSA-9020702">
    <property type="pathway name" value="Interleukin-1 signaling"/>
</dbReference>
<dbReference type="Reactome" id="R-HSA-917937">
    <property type="pathway name" value="Iron uptake and transport"/>
</dbReference>
<dbReference type="Reactome" id="R-HSA-9604323">
    <property type="pathway name" value="Negative regulation of NOTCH4 signaling"/>
</dbReference>
<dbReference type="Reactome" id="R-HSA-9708530">
    <property type="pathway name" value="Regulation of BACH1 activity"/>
</dbReference>
<dbReference type="Reactome" id="R-HSA-9725371">
    <property type="pathway name" value="Nuclear events stimulated by ALK signaling in cancer"/>
</dbReference>
<dbReference type="Reactome" id="R-HSA-9762114">
    <property type="pathway name" value="GSK3B and BTRC:CUL1-mediated-degradation of NFE2L2"/>
</dbReference>
<dbReference type="Reactome" id="R-HSA-983168">
    <property type="pathway name" value="Antigen processing: Ubiquitination &amp; Proteasome degradation"/>
</dbReference>
<dbReference type="SignaLink" id="Q13616"/>
<dbReference type="SIGNOR" id="Q13616"/>
<dbReference type="UniPathway" id="UPA00143"/>
<dbReference type="BioGRID-ORCS" id="8454">
    <property type="hits" value="529 hits in 1220 CRISPR screens"/>
</dbReference>
<dbReference type="ChiTaRS" id="CUL1">
    <property type="organism name" value="human"/>
</dbReference>
<dbReference type="EvolutionaryTrace" id="Q13616"/>
<dbReference type="GeneWiki" id="CUL1"/>
<dbReference type="GenomeRNAi" id="8454"/>
<dbReference type="Pharos" id="Q13616">
    <property type="development level" value="Tbio"/>
</dbReference>
<dbReference type="PRO" id="PR:Q13616"/>
<dbReference type="Proteomes" id="UP000005640">
    <property type="component" value="Chromosome 7"/>
</dbReference>
<dbReference type="RNAct" id="Q13616">
    <property type="molecule type" value="protein"/>
</dbReference>
<dbReference type="Bgee" id="ENSG00000055130">
    <property type="expression patterns" value="Expressed in secondary oocyte and 194 other cell types or tissues"/>
</dbReference>
<dbReference type="ExpressionAtlas" id="Q13616">
    <property type="expression patterns" value="baseline and differential"/>
</dbReference>
<dbReference type="GO" id="GO:0031461">
    <property type="term" value="C:cullin-RING ubiquitin ligase complex"/>
    <property type="evidence" value="ECO:0000314"/>
    <property type="project" value="MGI"/>
</dbReference>
<dbReference type="GO" id="GO:0005737">
    <property type="term" value="C:cytoplasm"/>
    <property type="evidence" value="ECO:0000305"/>
    <property type="project" value="UniProt"/>
</dbReference>
<dbReference type="GO" id="GO:0005829">
    <property type="term" value="C:cytosol"/>
    <property type="evidence" value="ECO:0000304"/>
    <property type="project" value="Reactome"/>
</dbReference>
<dbReference type="GO" id="GO:0005654">
    <property type="term" value="C:nucleoplasm"/>
    <property type="evidence" value="ECO:0000304"/>
    <property type="project" value="Reactome"/>
</dbReference>
<dbReference type="GO" id="GO:0005634">
    <property type="term" value="C:nucleus"/>
    <property type="evidence" value="ECO:0000305"/>
    <property type="project" value="UniProt"/>
</dbReference>
<dbReference type="GO" id="GO:1990452">
    <property type="term" value="C:Parkin-FBXW7-Cul1 ubiquitin ligase complex"/>
    <property type="evidence" value="ECO:0000353"/>
    <property type="project" value="ParkinsonsUK-UCL"/>
</dbReference>
<dbReference type="GO" id="GO:0005886">
    <property type="term" value="C:plasma membrane"/>
    <property type="evidence" value="ECO:0000314"/>
    <property type="project" value="UniProtKB"/>
</dbReference>
<dbReference type="GO" id="GO:0019005">
    <property type="term" value="C:SCF ubiquitin ligase complex"/>
    <property type="evidence" value="ECO:0000314"/>
    <property type="project" value="UniProtKB"/>
</dbReference>
<dbReference type="GO" id="GO:0030674">
    <property type="term" value="F:protein-macromolecule adaptor activity"/>
    <property type="evidence" value="ECO:0000318"/>
    <property type="project" value="GO_Central"/>
</dbReference>
<dbReference type="GO" id="GO:0160072">
    <property type="term" value="F:ubiquitin ligase complex scaffold activity"/>
    <property type="evidence" value="ECO:0000314"/>
    <property type="project" value="UniProt"/>
</dbReference>
<dbReference type="GO" id="GO:0031625">
    <property type="term" value="F:ubiquitin protein ligase binding"/>
    <property type="evidence" value="ECO:0000314"/>
    <property type="project" value="UniProt"/>
</dbReference>
<dbReference type="GO" id="GO:0009887">
    <property type="term" value="P:animal organ morphogenesis"/>
    <property type="evidence" value="ECO:0007669"/>
    <property type="project" value="Ensembl"/>
</dbReference>
<dbReference type="GO" id="GO:0008283">
    <property type="term" value="P:cell population proliferation"/>
    <property type="evidence" value="ECO:0007669"/>
    <property type="project" value="Ensembl"/>
</dbReference>
<dbReference type="GO" id="GO:0000082">
    <property type="term" value="P:G1/S transition of mitotic cell cycle"/>
    <property type="evidence" value="ECO:0000304"/>
    <property type="project" value="ProtInc"/>
</dbReference>
<dbReference type="GO" id="GO:0097193">
    <property type="term" value="P:intrinsic apoptotic signaling pathway"/>
    <property type="evidence" value="ECO:0000304"/>
    <property type="project" value="ProtInc"/>
</dbReference>
<dbReference type="GO" id="GO:0043123">
    <property type="term" value="P:positive regulation of canonical NF-kappaB signal transduction"/>
    <property type="evidence" value="ECO:0000314"/>
    <property type="project" value="UniProt"/>
</dbReference>
<dbReference type="GO" id="GO:0043161">
    <property type="term" value="P:proteasome-mediated ubiquitin-dependent protein catabolic process"/>
    <property type="evidence" value="ECO:0000314"/>
    <property type="project" value="UniProt"/>
</dbReference>
<dbReference type="GO" id="GO:0070936">
    <property type="term" value="P:protein K48-linked ubiquitination"/>
    <property type="evidence" value="ECO:0000314"/>
    <property type="project" value="UniProt"/>
</dbReference>
<dbReference type="GO" id="GO:0006513">
    <property type="term" value="P:protein monoubiquitination"/>
    <property type="evidence" value="ECO:0007669"/>
    <property type="project" value="Ensembl"/>
</dbReference>
<dbReference type="GO" id="GO:0016567">
    <property type="term" value="P:protein ubiquitination"/>
    <property type="evidence" value="ECO:0000314"/>
    <property type="project" value="UniProtKB"/>
</dbReference>
<dbReference type="GO" id="GO:0031146">
    <property type="term" value="P:SCF-dependent proteasomal ubiquitin-dependent protein catabolic process"/>
    <property type="evidence" value="ECO:0000314"/>
    <property type="project" value="UniProtKB"/>
</dbReference>
<dbReference type="FunFam" id="1.10.10.10:FF:000014">
    <property type="entry name" value="Cullin 1"/>
    <property type="match status" value="1"/>
</dbReference>
<dbReference type="FunFam" id="1.10.10.10:FF:000161">
    <property type="entry name" value="Cullin 1"/>
    <property type="match status" value="1"/>
</dbReference>
<dbReference type="FunFam" id="1.20.1310.10:FF:000007">
    <property type="entry name" value="Cullin 1"/>
    <property type="match status" value="1"/>
</dbReference>
<dbReference type="FunFam" id="1.20.1310.10:FF:000011">
    <property type="entry name" value="Cullin 1"/>
    <property type="match status" value="1"/>
</dbReference>
<dbReference type="FunFam" id="1.20.1310.10:FF:000019">
    <property type="entry name" value="Cullin 1"/>
    <property type="match status" value="1"/>
</dbReference>
<dbReference type="FunFam" id="3.30.230.130:FF:000003">
    <property type="entry name" value="Cullin 2"/>
    <property type="match status" value="1"/>
</dbReference>
<dbReference type="FunFam" id="1.20.1310.10:FF:000023">
    <property type="entry name" value="cullin-1"/>
    <property type="match status" value="1"/>
</dbReference>
<dbReference type="FunFam" id="4.10.1030.10:FF:000001">
    <property type="entry name" value="Putative Cullin-1"/>
    <property type="match status" value="1"/>
</dbReference>
<dbReference type="Gene3D" id="1.20.1310.10">
    <property type="entry name" value="Cullin Repeats"/>
    <property type="match status" value="4"/>
</dbReference>
<dbReference type="Gene3D" id="4.10.1030.10">
    <property type="entry name" value="Ring Box Chain A, domain 5"/>
    <property type="match status" value="1"/>
</dbReference>
<dbReference type="Gene3D" id="1.10.10.10">
    <property type="entry name" value="Winged helix-like DNA-binding domain superfamily/Winged helix DNA-binding domain"/>
    <property type="match status" value="2"/>
</dbReference>
<dbReference type="IDEAL" id="IID00133"/>
<dbReference type="InterPro" id="IPR045093">
    <property type="entry name" value="Cullin"/>
</dbReference>
<dbReference type="InterPro" id="IPR016157">
    <property type="entry name" value="Cullin_CS"/>
</dbReference>
<dbReference type="InterPro" id="IPR016158">
    <property type="entry name" value="Cullin_homology"/>
</dbReference>
<dbReference type="InterPro" id="IPR036317">
    <property type="entry name" value="Cullin_homology_sf"/>
</dbReference>
<dbReference type="InterPro" id="IPR001373">
    <property type="entry name" value="Cullin_N"/>
</dbReference>
<dbReference type="InterPro" id="IPR019559">
    <property type="entry name" value="Cullin_neddylation_domain"/>
</dbReference>
<dbReference type="InterPro" id="IPR016159">
    <property type="entry name" value="Cullin_repeat-like_dom_sf"/>
</dbReference>
<dbReference type="InterPro" id="IPR036388">
    <property type="entry name" value="WH-like_DNA-bd_sf"/>
</dbReference>
<dbReference type="InterPro" id="IPR036390">
    <property type="entry name" value="WH_DNA-bd_sf"/>
</dbReference>
<dbReference type="PANTHER" id="PTHR11932">
    <property type="entry name" value="CULLIN"/>
    <property type="match status" value="1"/>
</dbReference>
<dbReference type="Pfam" id="PF00888">
    <property type="entry name" value="Cullin"/>
    <property type="match status" value="1"/>
</dbReference>
<dbReference type="Pfam" id="PF10557">
    <property type="entry name" value="Cullin_Nedd8"/>
    <property type="match status" value="1"/>
</dbReference>
<dbReference type="SMART" id="SM00182">
    <property type="entry name" value="CULLIN"/>
    <property type="match status" value="1"/>
</dbReference>
<dbReference type="SMART" id="SM00884">
    <property type="entry name" value="Cullin_Nedd8"/>
    <property type="match status" value="1"/>
</dbReference>
<dbReference type="SUPFAM" id="SSF75632">
    <property type="entry name" value="Cullin homology domain"/>
    <property type="match status" value="1"/>
</dbReference>
<dbReference type="SUPFAM" id="SSF74788">
    <property type="entry name" value="Cullin repeat-like"/>
    <property type="match status" value="1"/>
</dbReference>
<dbReference type="SUPFAM" id="SSF46785">
    <property type="entry name" value="Winged helix' DNA-binding domain"/>
    <property type="match status" value="1"/>
</dbReference>
<dbReference type="PROSITE" id="PS01256">
    <property type="entry name" value="CULLIN_1"/>
    <property type="match status" value="1"/>
</dbReference>
<dbReference type="PROSITE" id="PS50069">
    <property type="entry name" value="CULLIN_2"/>
    <property type="match status" value="1"/>
</dbReference>
<accession>Q13616</accession>
<accession>D3DWG3</accession>
<accession>O60719</accession>
<accession>Q08AL6</accession>
<accession>Q8IYW1</accession>
<organism>
    <name type="scientific">Homo sapiens</name>
    <name type="common">Human</name>
    <dbReference type="NCBI Taxonomy" id="9606"/>
    <lineage>
        <taxon>Eukaryota</taxon>
        <taxon>Metazoa</taxon>
        <taxon>Chordata</taxon>
        <taxon>Craniata</taxon>
        <taxon>Vertebrata</taxon>
        <taxon>Euteleostomi</taxon>
        <taxon>Mammalia</taxon>
        <taxon>Eutheria</taxon>
        <taxon>Euarchontoglires</taxon>
        <taxon>Primates</taxon>
        <taxon>Haplorrhini</taxon>
        <taxon>Catarrhini</taxon>
        <taxon>Hominidae</taxon>
        <taxon>Homo</taxon>
    </lineage>
</organism>
<keyword id="KW-0002">3D-structure</keyword>
<keyword id="KW-0945">Host-virus interaction</keyword>
<keyword id="KW-1017">Isopeptide bond</keyword>
<keyword id="KW-0488">Methylation</keyword>
<keyword id="KW-1267">Proteomics identification</keyword>
<keyword id="KW-1185">Reference proteome</keyword>
<keyword id="KW-0832">Ubl conjugation</keyword>
<keyword id="KW-0833">Ubl conjugation pathway</keyword>
<feature type="chain" id="PRO_0000119787" description="Cullin-1">
    <location>
        <begin position="1"/>
        <end position="776"/>
    </location>
</feature>
<feature type="domain" description="Cullin neddylation" evidence="2">
    <location>
        <begin position="706"/>
        <end position="766"/>
    </location>
</feature>
<feature type="modified residue" description="Omega-N-methylarginine" evidence="64">
    <location>
        <position position="63"/>
    </location>
</feature>
<feature type="cross-link" description="Glycyl lysine isopeptide (Lys-Gly) (interchain with G-Cter in NEDD8)" evidence="6 15 23">
    <location>
        <position position="720"/>
    </location>
</feature>
<feature type="mutagenesis site" description="Abolishes interaction with Cul7-RING(FBXW8) complex; does not disrupt interaction with RBX1." evidence="51">
    <location>
        <begin position="1"/>
        <end position="331"/>
    </location>
</feature>
<feature type="sequence conflict" description="In Ref. 1; AAC50544." evidence="56" ref="1">
    <location>
        <begin position="59"/>
        <end position="82"/>
    </location>
</feature>
<feature type="sequence conflict" description="In Ref. 3; CAD97651." evidence="56" ref="3">
    <original>K</original>
    <variation>R</variation>
    <location>
        <position position="726"/>
    </location>
</feature>
<feature type="helix" evidence="67">
    <location>
        <begin position="19"/>
        <end position="31"/>
    </location>
</feature>
<feature type="turn" evidence="69">
    <location>
        <begin position="32"/>
        <end position="34"/>
    </location>
</feature>
<feature type="helix" evidence="67">
    <location>
        <begin position="39"/>
        <end position="53"/>
    </location>
</feature>
<feature type="helix" evidence="67">
    <location>
        <begin position="86"/>
        <end position="104"/>
    </location>
</feature>
<feature type="strand" evidence="67">
    <location>
        <begin position="107"/>
        <end position="109"/>
    </location>
</feature>
<feature type="helix" evidence="67">
    <location>
        <begin position="113"/>
        <end position="136"/>
    </location>
</feature>
<feature type="helix" evidence="67">
    <location>
        <begin position="138"/>
        <end position="151"/>
    </location>
</feature>
<feature type="helix" evidence="67">
    <location>
        <begin position="159"/>
        <end position="170"/>
    </location>
</feature>
<feature type="turn" evidence="67">
    <location>
        <begin position="171"/>
        <end position="175"/>
    </location>
</feature>
<feature type="helix" evidence="67">
    <location>
        <begin position="176"/>
        <end position="191"/>
    </location>
</feature>
<feature type="helix" evidence="67">
    <location>
        <begin position="198"/>
        <end position="210"/>
    </location>
</feature>
<feature type="turn" evidence="65">
    <location>
        <begin position="211"/>
        <end position="213"/>
    </location>
</feature>
<feature type="strand" evidence="67">
    <location>
        <begin position="215"/>
        <end position="217"/>
    </location>
</feature>
<feature type="helix" evidence="67">
    <location>
        <begin position="226"/>
        <end position="231"/>
    </location>
</feature>
<feature type="helix" evidence="67">
    <location>
        <begin position="233"/>
        <end position="252"/>
    </location>
</feature>
<feature type="helix" evidence="67">
    <location>
        <begin position="257"/>
        <end position="278"/>
    </location>
</feature>
<feature type="helix" evidence="67">
    <location>
        <begin position="281"/>
        <end position="283"/>
    </location>
</feature>
<feature type="helix" evidence="67">
    <location>
        <begin position="284"/>
        <end position="296"/>
    </location>
</feature>
<feature type="helix" evidence="67">
    <location>
        <begin position="297"/>
        <end position="299"/>
    </location>
</feature>
<feature type="helix" evidence="67">
    <location>
        <begin position="300"/>
        <end position="312"/>
    </location>
</feature>
<feature type="helix" evidence="67">
    <location>
        <begin position="316"/>
        <end position="326"/>
    </location>
</feature>
<feature type="turn" evidence="65">
    <location>
        <begin position="330"/>
        <end position="333"/>
    </location>
</feature>
<feature type="helix" evidence="67">
    <location>
        <begin position="334"/>
        <end position="355"/>
    </location>
</feature>
<feature type="helix" evidence="67">
    <location>
        <begin position="356"/>
        <end position="360"/>
    </location>
</feature>
<feature type="helix" evidence="67">
    <location>
        <begin position="363"/>
        <end position="384"/>
    </location>
</feature>
<feature type="turn" evidence="68">
    <location>
        <begin position="385"/>
        <end position="387"/>
    </location>
</feature>
<feature type="helix" evidence="67">
    <location>
        <begin position="389"/>
        <end position="404"/>
    </location>
</feature>
<feature type="helix" evidence="67">
    <location>
        <begin position="407"/>
        <end position="412"/>
    </location>
</feature>
<feature type="helix" evidence="67">
    <location>
        <begin position="417"/>
        <end position="430"/>
    </location>
</feature>
<feature type="helix" evidence="67">
    <location>
        <begin position="442"/>
        <end position="453"/>
    </location>
</feature>
<feature type="helix" evidence="67">
    <location>
        <begin position="459"/>
        <end position="475"/>
    </location>
</feature>
<feature type="helix" evidence="67">
    <location>
        <begin position="482"/>
        <end position="495"/>
    </location>
</feature>
<feature type="helix" evidence="67">
    <location>
        <begin position="499"/>
        <end position="526"/>
    </location>
</feature>
<feature type="strand" evidence="67">
    <location>
        <begin position="532"/>
        <end position="542"/>
    </location>
</feature>
<feature type="helix" evidence="67">
    <location>
        <begin position="557"/>
        <end position="559"/>
    </location>
</feature>
<feature type="helix" evidence="67">
    <location>
        <begin position="560"/>
        <end position="573"/>
    </location>
</feature>
<feature type="strand" evidence="67">
    <location>
        <begin position="574"/>
        <end position="597"/>
    </location>
</feature>
<feature type="strand" evidence="67">
    <location>
        <begin position="599"/>
        <end position="604"/>
    </location>
</feature>
<feature type="helix" evidence="67">
    <location>
        <begin position="605"/>
        <end position="612"/>
    </location>
</feature>
<feature type="helix" evidence="67">
    <location>
        <begin position="613"/>
        <end position="615"/>
    </location>
</feature>
<feature type="strand" evidence="67">
    <location>
        <begin position="618"/>
        <end position="621"/>
    </location>
</feature>
<feature type="helix" evidence="67">
    <location>
        <begin position="622"/>
        <end position="629"/>
    </location>
</feature>
<feature type="helix" evidence="67">
    <location>
        <begin position="633"/>
        <end position="645"/>
    </location>
</feature>
<feature type="strand" evidence="67">
    <location>
        <begin position="648"/>
        <end position="650"/>
    </location>
</feature>
<feature type="strand" evidence="65">
    <location>
        <begin position="652"/>
        <end position="654"/>
    </location>
</feature>
<feature type="turn" evidence="69">
    <location>
        <begin position="657"/>
        <end position="660"/>
    </location>
</feature>
<feature type="strand" evidence="67">
    <location>
        <begin position="668"/>
        <end position="671"/>
    </location>
</feature>
<feature type="strand" evidence="67">
    <location>
        <begin position="678"/>
        <end position="683"/>
    </location>
</feature>
<feature type="helix" evidence="65">
    <location>
        <begin position="691"/>
        <end position="700"/>
    </location>
</feature>
<feature type="helix" evidence="66">
    <location>
        <begin position="703"/>
        <end position="722"/>
    </location>
</feature>
<feature type="strand" evidence="66">
    <location>
        <begin position="723"/>
        <end position="726"/>
    </location>
</feature>
<feature type="helix" evidence="66">
    <location>
        <begin position="727"/>
        <end position="738"/>
    </location>
</feature>
<feature type="turn" evidence="66">
    <location>
        <begin position="739"/>
        <end position="741"/>
    </location>
</feature>
<feature type="helix" evidence="66">
    <location>
        <begin position="746"/>
        <end position="758"/>
    </location>
</feature>
<feature type="strand" evidence="66">
    <location>
        <begin position="761"/>
        <end position="765"/>
    </location>
</feature>
<feature type="strand" evidence="66">
    <location>
        <begin position="768"/>
        <end position="774"/>
    </location>
</feature>
<name>CUL1_HUMAN</name>
<evidence type="ECO:0000250" key="1">
    <source>
        <dbReference type="UniProtKB" id="Q9WTX6"/>
    </source>
</evidence>
<evidence type="ECO:0000255" key="2"/>
<evidence type="ECO:0000255" key="3">
    <source>
        <dbReference type="PROSITE-ProRule" id="PRU00330"/>
    </source>
</evidence>
<evidence type="ECO:0000269" key="4">
    <source>
    </source>
</evidence>
<evidence type="ECO:0000269" key="5">
    <source>
    </source>
</evidence>
<evidence type="ECO:0000269" key="6">
    <source>
    </source>
</evidence>
<evidence type="ECO:0000269" key="7">
    <source>
    </source>
</evidence>
<evidence type="ECO:0000269" key="8">
    <source>
    </source>
</evidence>
<evidence type="ECO:0000269" key="9">
    <source>
    </source>
</evidence>
<evidence type="ECO:0000269" key="10">
    <source>
    </source>
</evidence>
<evidence type="ECO:0000269" key="11">
    <source>
    </source>
</evidence>
<evidence type="ECO:0000269" key="12">
    <source>
    </source>
</evidence>
<evidence type="ECO:0000269" key="13">
    <source>
    </source>
</evidence>
<evidence type="ECO:0000269" key="14">
    <source>
    </source>
</evidence>
<evidence type="ECO:0000269" key="15">
    <source>
    </source>
</evidence>
<evidence type="ECO:0000269" key="16">
    <source>
    </source>
</evidence>
<evidence type="ECO:0000269" key="17">
    <source>
    </source>
</evidence>
<evidence type="ECO:0000269" key="18">
    <source>
    </source>
</evidence>
<evidence type="ECO:0000269" key="19">
    <source>
    </source>
</evidence>
<evidence type="ECO:0000269" key="20">
    <source>
    </source>
</evidence>
<evidence type="ECO:0000269" key="21">
    <source>
    </source>
</evidence>
<evidence type="ECO:0000269" key="22">
    <source>
    </source>
</evidence>
<evidence type="ECO:0000269" key="23">
    <source>
    </source>
</evidence>
<evidence type="ECO:0000269" key="24">
    <source>
    </source>
</evidence>
<evidence type="ECO:0000269" key="25">
    <source>
    </source>
</evidence>
<evidence type="ECO:0000269" key="26">
    <source>
    </source>
</evidence>
<evidence type="ECO:0000269" key="27">
    <source>
    </source>
</evidence>
<evidence type="ECO:0000269" key="28">
    <source>
    </source>
</evidence>
<evidence type="ECO:0000269" key="29">
    <source>
    </source>
</evidence>
<evidence type="ECO:0000269" key="30">
    <source>
    </source>
</evidence>
<evidence type="ECO:0000269" key="31">
    <source>
    </source>
</evidence>
<evidence type="ECO:0000269" key="32">
    <source>
    </source>
</evidence>
<evidence type="ECO:0000269" key="33">
    <source>
    </source>
</evidence>
<evidence type="ECO:0000269" key="34">
    <source>
    </source>
</evidence>
<evidence type="ECO:0000269" key="35">
    <source>
    </source>
</evidence>
<evidence type="ECO:0000269" key="36">
    <source>
    </source>
</evidence>
<evidence type="ECO:0000269" key="37">
    <source>
    </source>
</evidence>
<evidence type="ECO:0000269" key="38">
    <source>
    </source>
</evidence>
<evidence type="ECO:0000269" key="39">
    <source>
    </source>
</evidence>
<evidence type="ECO:0000269" key="40">
    <source>
    </source>
</evidence>
<evidence type="ECO:0000269" key="41">
    <source>
    </source>
</evidence>
<evidence type="ECO:0000269" key="42">
    <source>
    </source>
</evidence>
<evidence type="ECO:0000269" key="43">
    <source>
    </source>
</evidence>
<evidence type="ECO:0000269" key="44">
    <source>
    </source>
</evidence>
<evidence type="ECO:0000269" key="45">
    <source>
    </source>
</evidence>
<evidence type="ECO:0000269" key="46">
    <source>
    </source>
</evidence>
<evidence type="ECO:0000269" key="47">
    <source>
    </source>
</evidence>
<evidence type="ECO:0000269" key="48">
    <source>
    </source>
</evidence>
<evidence type="ECO:0000269" key="49">
    <source>
    </source>
</evidence>
<evidence type="ECO:0000269" key="50">
    <source>
    </source>
</evidence>
<evidence type="ECO:0000269" key="51">
    <source>
    </source>
</evidence>
<evidence type="ECO:0000269" key="52">
    <source>
    </source>
</evidence>
<evidence type="ECO:0000269" key="53">
    <source>
    </source>
</evidence>
<evidence type="ECO:0000269" key="54">
    <source>
    </source>
</evidence>
<evidence type="ECO:0000269" key="55">
    <source>
    </source>
</evidence>
<evidence type="ECO:0000305" key="56"/>
<evidence type="ECO:0007744" key="57">
    <source>
        <dbReference type="PDB" id="1LDJ"/>
    </source>
</evidence>
<evidence type="ECO:0007744" key="58">
    <source>
        <dbReference type="PDB" id="1LDK"/>
    </source>
</evidence>
<evidence type="ECO:0007744" key="59">
    <source>
        <dbReference type="PDB" id="1U6G"/>
    </source>
</evidence>
<evidence type="ECO:0007744" key="60">
    <source>
        <dbReference type="PDB" id="3TDU"/>
    </source>
</evidence>
<evidence type="ECO:0007744" key="61">
    <source>
        <dbReference type="PDB" id="3TDZ"/>
    </source>
</evidence>
<evidence type="ECO:0007744" key="62">
    <source>
        <dbReference type="PDB" id="4F52"/>
    </source>
</evidence>
<evidence type="ECO:0007744" key="63">
    <source>
        <dbReference type="PDB" id="5V89"/>
    </source>
</evidence>
<evidence type="ECO:0007744" key="64">
    <source>
    </source>
</evidence>
<evidence type="ECO:0007829" key="65">
    <source>
        <dbReference type="PDB" id="1LDK"/>
    </source>
</evidence>
<evidence type="ECO:0007829" key="66">
    <source>
        <dbReference type="PDB" id="3TDU"/>
    </source>
</evidence>
<evidence type="ECO:0007829" key="67">
    <source>
        <dbReference type="PDB" id="7Z8R"/>
    </source>
</evidence>
<evidence type="ECO:0007829" key="68">
    <source>
        <dbReference type="PDB" id="7ZBZ"/>
    </source>
</evidence>
<evidence type="ECO:0007829" key="69">
    <source>
        <dbReference type="PDB" id="8OR3"/>
    </source>
</evidence>
<sequence length="776" mass="89679">MSSTRSQNPHGLKQIGLDQIWDDLRAGIQQVYTRQSMAKSRYMELYTHVYNYCTSVHQSNQARGAGVPPSKSKKGQTPGGAQFVGLELYKRLKEFLKNYLTNLLKDGEDLMDESVLKFYTQQWEDYRFSSKVLNGICAYLNRHWVRRECDEGRKGIYEIYSLALVTWRDCLFRPLNKQVTNAVLKLIEKERNGETINTRLISGVVQSYVELGLNEDDAFAKGPTLTVYKESFESQFLADTERFYTRESTEFLQQNPVTEYMKKAEARLLEEQRRVQVYLHESTQDELARKCEQVLIEKHLEIFHTEFQNLLDADKNEDLGRMYNLVSRIQDGLGELKKLLETHIHNQGLAAIEKCGEAALNDPKMYVQTVLDVHKKYNALVMSAFNNDAGFVAALDKACGRFINNNAVTKMAQSSSKSPELLARYCDSLLKKSSKNPEEAELEDTLNQVMVVFKYIEDKDVFQKFYAKMLAKRLVHQNSASDDAEASMISKLKQACGFEYTSKLQRMFQDIGVSKDLNEQFKKHLTNSEPLDLDFSIQVLSSGSWPFQQSCTFALPSELERSYQRFTAFYASRHSGRKLTWLYQLSKGELVTNCFKNRYTLQASTFQMAILLQYNTEDAYTVQQLTDSTQIKMDILAQVLQILLKSKLLVLEDENANVDEVELKPDTLIKLYLGYKNKKLRVNINVPMKTEQKQEQETTHKNIEEDRKLLIQAAIVRIMKMRKVLKHQQLLGEVLTQLSSRFKPRVPVIKKCIDILIEKEYLERVDGEKDTYSYLA</sequence>
<proteinExistence type="evidence at protein level"/>
<reference key="1">
    <citation type="journal article" date="1996" name="Cell">
        <title>cul-1 is required for cell cycle exit in C. elegans and identifies a novel gene family.</title>
        <authorList>
            <person name="Kipreos E.T."/>
            <person name="Lander L.E."/>
            <person name="Wing J.P."/>
            <person name="He W.W."/>
            <person name="Hedgecock E.M."/>
        </authorList>
    </citation>
    <scope>NUCLEOTIDE SEQUENCE [MRNA]</scope>
</reference>
<reference key="2">
    <citation type="journal article" date="1998" name="Cell Growth Differ.">
        <title>Human CUL-1, but not other cullin family members, selectively interacts with SKP1 to form a complex with SKP2 and cyclin A.</title>
        <authorList>
            <person name="Michel J.J."/>
            <person name="Xiong Y."/>
        </authorList>
    </citation>
    <scope>NUCLEOTIDE SEQUENCE [MRNA]</scope>
    <scope>FUNCTION</scope>
    <scope>TISSUE SPECIFICITY</scope>
    <source>
        <tissue>Cervix carcinoma</tissue>
    </source>
</reference>
<reference key="3">
    <citation type="journal article" date="2007" name="BMC Genomics">
        <title>The full-ORF clone resource of the German cDNA consortium.</title>
        <authorList>
            <person name="Bechtel S."/>
            <person name="Rosenfelder H."/>
            <person name="Duda A."/>
            <person name="Schmidt C.P."/>
            <person name="Ernst U."/>
            <person name="Wellenreuther R."/>
            <person name="Mehrle A."/>
            <person name="Schuster C."/>
            <person name="Bahr A."/>
            <person name="Bloecker H."/>
            <person name="Heubner D."/>
            <person name="Hoerlein A."/>
            <person name="Michel G."/>
            <person name="Wedler H."/>
            <person name="Koehrer K."/>
            <person name="Ottenwaelder B."/>
            <person name="Poustka A."/>
            <person name="Wiemann S."/>
            <person name="Schupp I."/>
        </authorList>
    </citation>
    <scope>NUCLEOTIDE SEQUENCE [LARGE SCALE MRNA]</scope>
    <source>
        <tissue>Endometrium</tissue>
    </source>
</reference>
<reference key="4">
    <citation type="journal article" date="2003" name="Nature">
        <title>The DNA sequence of human chromosome 7.</title>
        <authorList>
            <person name="Hillier L.W."/>
            <person name="Fulton R.S."/>
            <person name="Fulton L.A."/>
            <person name="Graves T.A."/>
            <person name="Pepin K.H."/>
            <person name="Wagner-McPherson C."/>
            <person name="Layman D."/>
            <person name="Maas J."/>
            <person name="Jaeger S."/>
            <person name="Walker R."/>
            <person name="Wylie K."/>
            <person name="Sekhon M."/>
            <person name="Becker M.C."/>
            <person name="O'Laughlin M.D."/>
            <person name="Schaller M.E."/>
            <person name="Fewell G.A."/>
            <person name="Delehaunty K.D."/>
            <person name="Miner T.L."/>
            <person name="Nash W.E."/>
            <person name="Cordes M."/>
            <person name="Du H."/>
            <person name="Sun H."/>
            <person name="Edwards J."/>
            <person name="Bradshaw-Cordum H."/>
            <person name="Ali J."/>
            <person name="Andrews S."/>
            <person name="Isak A."/>
            <person name="Vanbrunt A."/>
            <person name="Nguyen C."/>
            <person name="Du F."/>
            <person name="Lamar B."/>
            <person name="Courtney L."/>
            <person name="Kalicki J."/>
            <person name="Ozersky P."/>
            <person name="Bielicki L."/>
            <person name="Scott K."/>
            <person name="Holmes A."/>
            <person name="Harkins R."/>
            <person name="Harris A."/>
            <person name="Strong C.M."/>
            <person name="Hou S."/>
            <person name="Tomlinson C."/>
            <person name="Dauphin-Kohlberg S."/>
            <person name="Kozlowicz-Reilly A."/>
            <person name="Leonard S."/>
            <person name="Rohlfing T."/>
            <person name="Rock S.M."/>
            <person name="Tin-Wollam A.-M."/>
            <person name="Abbott A."/>
            <person name="Minx P."/>
            <person name="Maupin R."/>
            <person name="Strowmatt C."/>
            <person name="Latreille P."/>
            <person name="Miller N."/>
            <person name="Johnson D."/>
            <person name="Murray J."/>
            <person name="Woessner J.P."/>
            <person name="Wendl M.C."/>
            <person name="Yang S.-P."/>
            <person name="Schultz B.R."/>
            <person name="Wallis J.W."/>
            <person name="Spieth J."/>
            <person name="Bieri T.A."/>
            <person name="Nelson J.O."/>
            <person name="Berkowicz N."/>
            <person name="Wohldmann P.E."/>
            <person name="Cook L.L."/>
            <person name="Hickenbotham M.T."/>
            <person name="Eldred J."/>
            <person name="Williams D."/>
            <person name="Bedell J.A."/>
            <person name="Mardis E.R."/>
            <person name="Clifton S.W."/>
            <person name="Chissoe S.L."/>
            <person name="Marra M.A."/>
            <person name="Raymond C."/>
            <person name="Haugen E."/>
            <person name="Gillett W."/>
            <person name="Zhou Y."/>
            <person name="James R."/>
            <person name="Phelps K."/>
            <person name="Iadanoto S."/>
            <person name="Bubb K."/>
            <person name="Simms E."/>
            <person name="Levy R."/>
            <person name="Clendenning J."/>
            <person name="Kaul R."/>
            <person name="Kent W.J."/>
            <person name="Furey T.S."/>
            <person name="Baertsch R.A."/>
            <person name="Brent M.R."/>
            <person name="Keibler E."/>
            <person name="Flicek P."/>
            <person name="Bork P."/>
            <person name="Suyama M."/>
            <person name="Bailey J.A."/>
            <person name="Portnoy M.E."/>
            <person name="Torrents D."/>
            <person name="Chinwalla A.T."/>
            <person name="Gish W.R."/>
            <person name="Eddy S.R."/>
            <person name="McPherson J.D."/>
            <person name="Olson M.V."/>
            <person name="Eichler E.E."/>
            <person name="Green E.D."/>
            <person name="Waterston R.H."/>
            <person name="Wilson R.K."/>
        </authorList>
    </citation>
    <scope>NUCLEOTIDE SEQUENCE [LARGE SCALE GENOMIC DNA]</scope>
</reference>
<reference key="5">
    <citation type="submission" date="2005-09" db="EMBL/GenBank/DDBJ databases">
        <authorList>
            <person name="Mural R.J."/>
            <person name="Istrail S."/>
            <person name="Sutton G.G."/>
            <person name="Florea L."/>
            <person name="Halpern A.L."/>
            <person name="Mobarry C.M."/>
            <person name="Lippert R."/>
            <person name="Walenz B."/>
            <person name="Shatkay H."/>
            <person name="Dew I."/>
            <person name="Miller J.R."/>
            <person name="Flanigan M.J."/>
            <person name="Edwards N.J."/>
            <person name="Bolanos R."/>
            <person name="Fasulo D."/>
            <person name="Halldorsson B.V."/>
            <person name="Hannenhalli S."/>
            <person name="Turner R."/>
            <person name="Yooseph S."/>
            <person name="Lu F."/>
            <person name="Nusskern D.R."/>
            <person name="Shue B.C."/>
            <person name="Zheng X.H."/>
            <person name="Zhong F."/>
            <person name="Delcher A.L."/>
            <person name="Huson D.H."/>
            <person name="Kravitz S.A."/>
            <person name="Mouchard L."/>
            <person name="Reinert K."/>
            <person name="Remington K.A."/>
            <person name="Clark A.G."/>
            <person name="Waterman M.S."/>
            <person name="Eichler E.E."/>
            <person name="Adams M.D."/>
            <person name="Hunkapiller M.W."/>
            <person name="Myers E.W."/>
            <person name="Venter J.C."/>
        </authorList>
    </citation>
    <scope>NUCLEOTIDE SEQUENCE [LARGE SCALE GENOMIC DNA]</scope>
</reference>
<reference key="6">
    <citation type="journal article" date="2004" name="Genome Res.">
        <title>The status, quality, and expansion of the NIH full-length cDNA project: the Mammalian Gene Collection (MGC).</title>
        <authorList>
            <consortium name="The MGC Project Team"/>
        </authorList>
    </citation>
    <scope>NUCLEOTIDE SEQUENCE [LARGE SCALE MRNA]</scope>
</reference>
<reference key="7">
    <citation type="journal article" date="1999" name="Mol. Cell">
        <title>Recruitment of a ROC1-CUL1 ubiquitin ligase by Skp1 and HOS to catalyze the ubiquitination of I kappa B alpha.</title>
        <authorList>
            <person name="Tan P."/>
            <person name="Fuchs S.Y."/>
            <person name="Chen A."/>
            <person name="Wu K."/>
            <person name="Gomez C."/>
            <person name="Ronai Z."/>
            <person name="Pan Z.-Q."/>
        </authorList>
    </citation>
    <scope>INTERACTION WITH RBX1</scope>
    <scope>IDENTIFICATION IN SCF COMPLEX WITH RBX1; SKP1 AND SKP2</scope>
</reference>
<reference key="8">
    <citation type="journal article" date="1999" name="Mol. Cell">
        <title>ROC1, a homolog of APC11, represents a family of cullin partners with an associated ubiquitin ligase activity.</title>
        <authorList>
            <person name="Ohta T."/>
            <person name="Michel J.J."/>
            <person name="Schottelius A.J."/>
            <person name="Xiong Y."/>
        </authorList>
    </citation>
    <scope>INTERACTION WITH RBX1 AND RNF7</scope>
</reference>
<reference key="9">
    <citation type="journal article" date="1999" name="Oncogene">
        <title>Covalent modification of all members of human cullin family proteins by NEDD8.</title>
        <authorList>
            <person name="Hori T."/>
            <person name="Osaka F."/>
            <person name="Chiba T."/>
            <person name="Miyamoto C."/>
            <person name="Okabayashi K."/>
            <person name="Shimbara N."/>
            <person name="Kato S."/>
            <person name="Tanaka K."/>
        </authorList>
    </citation>
    <scope>NEDDYLATION AT LYS-720</scope>
</reference>
<reference key="10">
    <citation type="journal article" date="2000" name="Mol. Cell. Biol.">
        <title>Nedd8 modification of cul-1 activates SCF(beta(TrCP))-dependent ubiquitination of IkappaBalpha.</title>
        <authorList>
            <person name="Read M.A."/>
            <person name="Brownell J.E."/>
            <person name="Gladysheva T.B."/>
            <person name="Hottelet M."/>
            <person name="Parent L.A."/>
            <person name="Coggins M.B."/>
            <person name="Pierce J.W."/>
            <person name="Podust V.N."/>
            <person name="Luo R.-S."/>
            <person name="Chau V."/>
            <person name="Palombella V.J."/>
        </authorList>
    </citation>
    <scope>NEDDYLATION</scope>
</reference>
<reference key="11">
    <citation type="journal article" date="2000" name="Oncogene">
        <title>Yeast homolog of human SAG/ROC2/Rbx2/Hrt2 is essential for cell growth, but not for germination: chip profiling implicates its role in cell cycle regulation.</title>
        <authorList>
            <person name="Swaroop M."/>
            <person name="Wang Y."/>
            <person name="Miller P."/>
            <person name="Duan H."/>
            <person name="Jatkoe T."/>
            <person name="Madore S.J."/>
            <person name="Sun Y."/>
        </authorList>
    </citation>
    <scope>INTERACTION WITH RNF7</scope>
</reference>
<reference key="12">
    <citation type="journal article" date="2001" name="Science">
        <title>Promotion of NEDD-CUL1 conjugate cleavage by COP9 signalosome.</title>
        <authorList>
            <person name="Lyapina S."/>
            <person name="Cope G."/>
            <person name="Shevchenko A."/>
            <person name="Serino G."/>
            <person name="Tsuge T."/>
            <person name="Zhou C."/>
            <person name="Wolf D.A."/>
            <person name="Wei N."/>
            <person name="Shevchenko A."/>
            <person name="Deshaies R.J."/>
        </authorList>
    </citation>
    <scope>INTERACTION WITH COPS2</scope>
</reference>
<reference key="13">
    <citation type="journal article" date="2002" name="Mol. Cell">
        <title>CAND1 binds to unneddylated CUL1 and regulates the formation of SCF ubiquitin E3 ligase complex.</title>
        <authorList>
            <person name="Zheng J."/>
            <person name="Yang X."/>
            <person name="Harrell J.M."/>
            <person name="Ryzhikov S."/>
            <person name="Shim E.-H."/>
            <person name="Lykke-Andersen K."/>
            <person name="Wei N."/>
            <person name="Sun H."/>
            <person name="Kobayashi R."/>
            <person name="Zhang H."/>
        </authorList>
    </citation>
    <scope>INTERACTION WITH TIP120A</scope>
</reference>
<reference key="14">
    <citation type="journal article" date="2003" name="J. Biol. Chem.">
        <title>TIP120A associates with cullins and modulates ubiquitin ligase activity.</title>
        <authorList>
            <person name="Min K.-W."/>
            <person name="Hwang J.-W."/>
            <person name="Lee J.-S."/>
            <person name="Park Y."/>
            <person name="Tamura T.-A."/>
            <person name="Yoon J.-B."/>
        </authorList>
    </citation>
    <scope>INTERACTION WITH TIP120A</scope>
</reference>
<reference key="15">
    <citation type="journal article" date="2004" name="J. Biol. Chem.">
        <title>Fbx7 functions in the SCF complex regulating Cdk1-cyclin B-phosphorylated hepatoma up-regulated protein (HURP) proteolysis by a proline-rich region.</title>
        <authorList>
            <person name="Hsu J.-M."/>
            <person name="Lee Y.-C.G."/>
            <person name="Yu C.-T.R."/>
            <person name="Huang C.-Y.F."/>
        </authorList>
    </citation>
    <scope>IDENTIFICATION IN THE SCF(FBXO7) COMPLEX</scope>
</reference>
<reference key="16">
    <citation type="journal article" date="2005" name="J. Biol. Chem.">
        <title>Degradation of MyoD mediated by the SCF (MAFbx) ubiquitin ligase.</title>
        <authorList>
            <person name="Tintignac L.A."/>
            <person name="Lagirand J."/>
            <person name="Batonnet S."/>
            <person name="Sirri V."/>
            <person name="Leibovitch M.P."/>
            <person name="Leibovitch S.A."/>
        </authorList>
    </citation>
    <scope>RECONSTITUTION OF THE SCF(FBXO32) COMPLEX</scope>
    <scope>FUNCTION IN UBIQUITINATION OF MYOD1</scope>
</reference>
<reference key="17">
    <citation type="journal article" date="2005" name="J. Biol. Chem.">
        <title>FBW2 targets GCMa to the ubiquitin-proteasome degradation system.</title>
        <authorList>
            <person name="Yang C.S."/>
            <person name="Yu C."/>
            <person name="Chuang H.C."/>
            <person name="Chang C.W."/>
            <person name="Chang G.D."/>
            <person name="Yao T.P."/>
            <person name="Chen H."/>
        </authorList>
    </citation>
    <scope>INTERACTION WITH GCM1</scope>
    <scope>FUNCTION IN UBIQUITINATION OF GCM1</scope>
</reference>
<reference key="18">
    <citation type="journal article" date="2006" name="Biochim. Biophys. Acta">
        <title>FBXO25, an F-box protein homologue of atrogin-1, is not induced in atrophying muscle.</title>
        <authorList>
            <person name="Maragno A.L."/>
            <person name="Baqui M.M."/>
            <person name="Gomes M.D."/>
        </authorList>
    </citation>
    <scope>RECONSTITUTION OF THE SCF(FBXO25) COMPLEX</scope>
</reference>
<reference key="19">
    <citation type="journal article" date="2006" name="FEBS Lett.">
        <title>Proteasomal degradation of the multifunctional regulator YB-1 is mediated by an F-Box protein induced during programmed cell death.</title>
        <authorList>
            <person name="Lutz M."/>
            <person name="Wempe F."/>
            <person name="Bahr I."/>
            <person name="Zopf D."/>
            <person name="von Melchner H."/>
        </authorList>
    </citation>
    <scope>IDENTIFICATION IN THE SCF(FBXO33) COMPLEX WITH SKP1; RBX1 AND FBXO33</scope>
</reference>
<reference key="20">
    <citation type="journal article" date="2006" name="Mol. Cell. Biol.">
        <title>Regulation of p27 degradation and S-phase progression by Ro52 RING finger protein.</title>
        <authorList>
            <person name="Sabile A."/>
            <person name="Meyer A.M."/>
            <person name="Wirbelauer C."/>
            <person name="Hess D."/>
            <person name="Kogel U."/>
            <person name="Scheffner M."/>
            <person name="Krek W."/>
        </authorList>
    </citation>
    <scope>INTERACTION WITH THE SCF(SKP2)-LIKE COMPLEX</scope>
    <scope>INTERACTION WITH TRIM21</scope>
</reference>
<reference key="21">
    <citation type="journal article" date="2007" name="Cell. Signal.">
        <title>Characterization of cullin-based E3 ubiquitin ligases in intact mammalian cells -- evidence for cullin dimerization.</title>
        <authorList>
            <person name="Chew E.H."/>
            <person name="Poobalasingam T."/>
            <person name="Hawkey C.J."/>
            <person name="Hagen T."/>
        </authorList>
    </citation>
    <scope>SELF-ASSOCIATION</scope>
</reference>
<reference key="22">
    <citation type="journal article" date="2007" name="J. Biol. Chem.">
        <title>FBXO11 promotes the neddylation of p53 and inhibits its transcriptional activity.</title>
        <authorList>
            <person name="Abida W.M."/>
            <person name="Nikolaev A."/>
            <person name="Zhao W."/>
            <person name="Zhang W."/>
            <person name="Gu W."/>
        </authorList>
    </citation>
    <scope>IDENTIFICATION IN THE SCF(FBXO11) COMPLEX WITH SKP1; RBX1 AND FBXO11</scope>
</reference>
<reference key="23">
    <citation type="journal article" date="2008" name="Cell">
        <title>Structural insights into NEDD8 activation of cullin-RING ligases: conformational control of conjugation.</title>
        <authorList>
            <person name="Duda D.M."/>
            <person name="Borg L.A."/>
            <person name="Scott D.C."/>
            <person name="Hunt H.W."/>
            <person name="Hammel M."/>
            <person name="Schulman B.A."/>
        </authorList>
    </citation>
    <scope>NEDDYLATION AT LYS-720</scope>
</reference>
<reference key="24">
    <citation type="journal article" date="2008" name="J. Biol. Chem.">
        <title>Diversity in tissue expression, substrate binding, and SCF complex formation for a lectin family of ubiquitin ligases.</title>
        <authorList>
            <person name="Glenn K.A."/>
            <person name="Nelson R.F."/>
            <person name="Wen H.M."/>
            <person name="Mallinger A.J."/>
            <person name="Paulson H.L."/>
        </authorList>
    </citation>
    <scope>INTERACTION WITH FBXO44; FBXO17 AND FBXO27</scope>
    <scope>IDENTIFICATION IN SCF-COMPLEX</scope>
</reference>
<reference key="25">
    <citation type="journal article" date="2008" name="Mol. Cell. Biol.">
        <title>Regulation of Chk2 ubiquitination and signaling through autophosphorylation of serine 379.</title>
        <authorList>
            <person name="Lovly C.M."/>
            <person name="Yan L."/>
            <person name="Ryan C.E."/>
            <person name="Takada S."/>
            <person name="Piwnica-Worms H."/>
        </authorList>
    </citation>
    <scope>FUNCTION IN CHEK2 UBIQUITINATION</scope>
    <scope>INTERACTION WITH CHEK2</scope>
</reference>
<reference key="26">
    <citation type="journal article" date="2009" name="J. Biol. Chem.">
        <title>Adenovirus E1A inhibits SCF(Fbw7) ubiquitin ligase.</title>
        <authorList>
            <person name="Isobe T."/>
            <person name="Hattori T."/>
            <person name="Kitagawa K."/>
            <person name="Uchida C."/>
            <person name="Kotake Y."/>
            <person name="Kosugi I."/>
            <person name="Oda T."/>
            <person name="Kitagawa M."/>
        </authorList>
    </citation>
    <scope>FUNCTION</scope>
    <scope>INTERACTION WITH HADV5 E1A (MICROBIAL INFECTION)</scope>
</reference>
<reference key="27">
    <citation type="journal article" date="2010" name="Nat. Cell Biol.">
        <title>A deneddylase encoded by Epstein-Barr virus promotes viral DNA replication by regulating the activity of cullin-RING ligases.</title>
        <authorList>
            <person name="Gastaldello S."/>
            <person name="Hildebrand S."/>
            <person name="Faridani O."/>
            <person name="Callegari S."/>
            <person name="Palmkvist M."/>
            <person name="Di Guglielmo C."/>
            <person name="Masucci M.G."/>
        </authorList>
    </citation>
    <scope>INTERACTION WITH EPSTEIN-BARR VIRUS BPLF1</scope>
    <scope>DENEDDYLATION BY EPSTEIN-BARR VIRUS BPLF1 (MICROBIAL INFECTION)</scope>
</reference>
<reference key="28">
    <citation type="journal article" date="2010" name="Nature">
        <title>SCF(Cyclin F) controls centrosome homeostasis and mitotic fidelity through CP110 degradation.</title>
        <authorList>
            <person name="D'Angiolella V."/>
            <person name="Donato V."/>
            <person name="Vijayakumar S."/>
            <person name="Saraf A."/>
            <person name="Florens L."/>
            <person name="Washburn M.P."/>
            <person name="Dynlacht B."/>
            <person name="Pagano M."/>
        </authorList>
    </citation>
    <scope>IDENTIFICATION IN THE SCF(CCNF) COMPLEX</scope>
</reference>
<reference key="29">
    <citation type="journal article" date="2011" name="BMC Syst. Biol.">
        <title>Initial characterization of the human central proteome.</title>
        <authorList>
            <person name="Burkard T.R."/>
            <person name="Planyavsky M."/>
            <person name="Kaupe I."/>
            <person name="Breitwieser F.P."/>
            <person name="Buerckstuemmer T."/>
            <person name="Bennett K.L."/>
            <person name="Superti-Furga G."/>
            <person name="Colinge J."/>
        </authorList>
    </citation>
    <scope>IDENTIFICATION BY MASS SPECTROMETRY [LARGE SCALE ANALYSIS]</scope>
</reference>
<reference key="30">
    <citation type="journal article" date="2011" name="Mol. Cell">
        <title>mTOR drives its own activation via SCF(betaTrCP)-dependent degradation of the mTOR inhibitor DEPTOR.</title>
        <authorList>
            <person name="Gao D."/>
            <person name="Inuzuka H."/>
            <person name="Tan M.K."/>
            <person name="Fukushima H."/>
            <person name="Locasale J.W."/>
            <person name="Liu P."/>
            <person name="Wan L."/>
            <person name="Zhai B."/>
            <person name="Chin Y.R."/>
            <person name="Shaik S."/>
            <person name="Lyssiotis C.A."/>
            <person name="Gygi S.P."/>
            <person name="Toker A."/>
            <person name="Cantley L.C."/>
            <person name="Asara J.M."/>
            <person name="Harper J.W."/>
            <person name="Wei W."/>
        </authorList>
    </citation>
    <scope>FUNCTION</scope>
    <scope>PATHWAY</scope>
    <scope>IDENTIFICATION IN THE SCF(BTRC) COMPLEX</scope>
</reference>
<reference key="31">
    <citation type="journal article" date="2011" name="Mol. Cell">
        <title>mTOR generates an auto-amplification loop by triggering the betaTrCP- and CK1alpha-dependent degradation of DEPTOR.</title>
        <authorList>
            <person name="Duan S."/>
            <person name="Skaar J.R."/>
            <person name="Kuchay S."/>
            <person name="Toschi A."/>
            <person name="Kanarek N."/>
            <person name="Ben-Neriah Y."/>
            <person name="Pagano M."/>
        </authorList>
    </citation>
    <scope>FUNCTION</scope>
    <scope>PATHWAY</scope>
    <scope>IDENTIFICATION IN THE SCF(BTRC) COMPLEX</scope>
</reference>
<reference key="32">
    <citation type="journal article" date="2012" name="Mol. Cell">
        <title>The glomuvenous malformation protein Glomulin binds Rbx1 and regulates cullin RING ligase-mediated turnover of Fbw7.</title>
        <authorList>
            <person name="Tron A.E."/>
            <person name="Arai T."/>
            <person name="Duda D.M."/>
            <person name="Kuwabara H."/>
            <person name="Olszewski J.L."/>
            <person name="Fujiwara Y."/>
            <person name="Bahamon B.N."/>
            <person name="Signoretti S."/>
            <person name="Schulman B.A."/>
            <person name="DeCaprio J.A."/>
        </authorList>
    </citation>
    <scope>IDENTIFICATION IN THE SCF(FBXW7) COMPLEX</scope>
    <scope>FUNCTION</scope>
    <scope>PATHWAY</scope>
</reference>
<reference key="33">
    <citation type="journal article" date="2012" name="Nature">
        <title>FBXO11 targets BCL6 for degradation and is inactivated in diffuse large B-cell lymphomas.</title>
        <authorList>
            <person name="Duan S."/>
            <person name="Cermak L."/>
            <person name="Pagan J.K."/>
            <person name="Rossi M."/>
            <person name="Martinengo C."/>
            <person name="di Celle P.F."/>
            <person name="Chapuy B."/>
            <person name="Shipp M."/>
            <person name="Chiarle R."/>
            <person name="Pagano M."/>
        </authorList>
    </citation>
    <scope>FUNCTION IN UBIQUITINATION OF BCL6</scope>
    <scope>IDENTIFICATION IN THE SCF(FBXO11) COMPLEX</scope>
</reference>
<reference key="34">
    <citation type="journal article" date="2013" name="EMBO J.">
        <title>TRIAD1 and HHARI bind to and are activated by distinct neddylated Cullin-RING ligase complexes.</title>
        <authorList>
            <person name="Kelsall I.R."/>
            <person name="Duda D.M."/>
            <person name="Olszewski J.L."/>
            <person name="Hofmann K."/>
            <person name="Knebel A."/>
            <person name="Langevin F."/>
            <person name="Wood N."/>
            <person name="Wightman M."/>
            <person name="Schulman B.A."/>
            <person name="Alpi A.F."/>
        </authorList>
    </citation>
    <scope>INTERACTION WITH ARIH1</scope>
    <scope>NEDDYLATION</scope>
</reference>
<reference key="35">
    <citation type="journal article" date="2013" name="Nat. Cell Biol.">
        <title>SCF(Fbxo9) and CK2 direct the cellular response to growth factor withdrawal via Tel2/Tti1 degradation and promote survival in multiple myeloma.</title>
        <authorList>
            <person name="Fernandez-Saiz V."/>
            <person name="Targosz B.S."/>
            <person name="Lemeer S."/>
            <person name="Eichner R."/>
            <person name="Langer C."/>
            <person name="Bullinger L."/>
            <person name="Reiter C."/>
            <person name="Slotta-Huspenina J."/>
            <person name="Schroeder S."/>
            <person name="Knorn A.M."/>
            <person name="Kurutz J."/>
            <person name="Peschel C."/>
            <person name="Pagano M."/>
            <person name="Kuster B."/>
            <person name="Bassermann F."/>
        </authorList>
    </citation>
    <scope>IDENTIFICATION IN THE SCF(FBXO9) COMPLEX</scope>
    <scope>FUNCTION</scope>
</reference>
<reference key="36">
    <citation type="journal article" date="2013" name="PLoS ONE">
        <title>Myeloma overexpressed 2 (Myeov2) regulates L11 subnuclear localization through Nedd8 modification.</title>
        <authorList>
            <person name="Ebina M."/>
            <person name="Tsuruta F."/>
            <person name="Katoh M.C."/>
            <person name="Kigoshi Y."/>
            <person name="Someya A."/>
            <person name="Chiba T."/>
        </authorList>
    </citation>
    <scope>INTERACTION WITH COPS9</scope>
</reference>
<reference key="37">
    <citation type="journal article" date="2013" name="Proc. Natl. Acad. Sci. U.S.A.">
        <title>Related F-box proteins control cell death in Caenorhabditis elegans and human lymphoma.</title>
        <authorList>
            <person name="Chiorazzi M."/>
            <person name="Rui L."/>
            <person name="Yang Y."/>
            <person name="Ceribelli M."/>
            <person name="Tishbi N."/>
            <person name="Maurer C.W."/>
            <person name="Ranuncolo S.M."/>
            <person name="Zhao H."/>
            <person name="Xu W."/>
            <person name="Chan W.C."/>
            <person name="Jaffe E.S."/>
            <person name="Gascoyne R.D."/>
            <person name="Campo E."/>
            <person name="Rosenwald A."/>
            <person name="Ott G."/>
            <person name="Delabie J."/>
            <person name="Rimsza L.M."/>
            <person name="Shaham S."/>
            <person name="Staudt L.M."/>
        </authorList>
    </citation>
    <scope>FUNCTION IN UBIQUITINATION OF BCL2</scope>
    <scope>IDENTIFICATION IN THE SCF(FBXO10) COMPLEX</scope>
</reference>
<reference key="38">
    <citation type="journal article" date="2013" name="Structure">
        <title>Structural conservation of distinctive N-terminal acetylation-dependent interactions across a family of mammalian NEDD8 ligation enzymes.</title>
        <authorList>
            <person name="Monda J.K."/>
            <person name="Scott D.C."/>
            <person name="Miller D.J."/>
            <person name="Lydeard J."/>
            <person name="King D."/>
            <person name="Harper J.W."/>
            <person name="Bennett E.J."/>
            <person name="Schulman B.A."/>
        </authorList>
    </citation>
    <scope>INTERACTION WITH DCUN1D1; DCUN1D2; DCUN1D3; DCUN1D4 AND DCUN1D5</scope>
</reference>
<reference key="39">
    <citation type="journal article" date="2014" name="Clin. Cancer Res.">
        <title>Oncogenic function of SCCRO5/DCUN1D5 requires its Neddylation E3 activity and nuclear localization.</title>
        <authorList>
            <person name="Bommelje C.C."/>
            <person name="Weeda V.B."/>
            <person name="Huang G."/>
            <person name="Shah K."/>
            <person name="Bains S."/>
            <person name="Buss E."/>
            <person name="Shaha M."/>
            <person name="Goenen M."/>
            <person name="Ghossein R."/>
            <person name="Ramanathan S.Y."/>
            <person name="Singh B."/>
        </authorList>
    </citation>
    <scope>INTERACTION WITH DCUN1D5</scope>
</reference>
<reference key="40">
    <citation type="journal article" date="2014" name="J. Biol. Chem.">
        <title>SCCRO3 (DCUN1D3) antagonizes the neddylation and oncogenic activity of SCCRO (DCUN1D1).</title>
        <authorList>
            <person name="Huang G."/>
            <person name="Stock C."/>
            <person name="Bommelje C.C."/>
            <person name="Weeda V.B."/>
            <person name="Shah K."/>
            <person name="Bains S."/>
            <person name="Buss E."/>
            <person name="Shaha M."/>
            <person name="Rechler W."/>
            <person name="Ramanathan S.Y."/>
            <person name="Singh B."/>
        </authorList>
    </citation>
    <scope>INTERACTION WITH DCUN1D3</scope>
</reference>
<reference key="41">
    <citation type="journal article" date="2014" name="J. Proteomics">
        <title>An enzyme assisted RP-RPLC approach for in-depth analysis of human liver phosphoproteome.</title>
        <authorList>
            <person name="Bian Y."/>
            <person name="Song C."/>
            <person name="Cheng K."/>
            <person name="Dong M."/>
            <person name="Wang F."/>
            <person name="Huang J."/>
            <person name="Sun D."/>
            <person name="Wang L."/>
            <person name="Ye M."/>
            <person name="Zou H."/>
        </authorList>
    </citation>
    <scope>IDENTIFICATION BY MASS SPECTROMETRY [LARGE SCALE ANALYSIS]</scope>
    <source>
        <tissue>Liver</tissue>
    </source>
</reference>
<reference key="42">
    <citation type="journal article" date="2014" name="Mol. Cell. Proteomics">
        <title>Immunoaffinity enrichment and mass spectrometry analysis of protein methylation.</title>
        <authorList>
            <person name="Guo A."/>
            <person name="Gu H."/>
            <person name="Zhou J."/>
            <person name="Mulhern D."/>
            <person name="Wang Y."/>
            <person name="Lee K.A."/>
            <person name="Yang V."/>
            <person name="Aguiar M."/>
            <person name="Kornhauser J."/>
            <person name="Jia X."/>
            <person name="Ren J."/>
            <person name="Beausoleil S.A."/>
            <person name="Silva J.C."/>
            <person name="Vemulapalli V."/>
            <person name="Bedford M.T."/>
            <person name="Comb M.J."/>
        </authorList>
    </citation>
    <scope>METHYLATION [LARGE SCALE ANALYSIS] AT ARG-63</scope>
    <scope>IDENTIFICATION BY MASS SPECTROMETRY [LARGE SCALE ANALYSIS]</scope>
    <source>
        <tissue>Colon carcinoma</tissue>
    </source>
</reference>
<reference key="43">
    <citation type="journal article" date="2015" name="Eur. J. Cell Biol.">
        <title>Cep68 can be regulated by Nek2 and SCF complex.</title>
        <authorList>
            <person name="Man X."/>
            <person name="Megraw T.L."/>
            <person name="Lim Y.P."/>
        </authorList>
    </citation>
    <scope>FUNCTION</scope>
</reference>
<reference key="44">
    <citation type="journal article" date="2015" name="Nat. Cell Biol.">
        <title>Degradation of Cep68 and PCNT cleavage mediate Cep215 removal from the PCM to allow centriole separation, disengagement and licensing.</title>
        <authorList>
            <person name="Pagan J.K."/>
            <person name="Marzio A."/>
            <person name="Jones M.J."/>
            <person name="Saraf A."/>
            <person name="Jallepalli P.V."/>
            <person name="Florens L."/>
            <person name="Washburn M.P."/>
            <person name="Pagano M."/>
        </authorList>
    </citation>
    <scope>FUNCTION</scope>
    <scope>IDENTIFICATION IN SCF(FBXW11) COMPLEX</scope>
    <scope>INTERACTION WITH CEP68</scope>
</reference>
<reference key="45">
    <citation type="journal article" date="2016" name="Cell">
        <title>Two distinct types of E3 ligases work in unison to regulate substrate ubiquitylation.</title>
        <authorList>
            <person name="Scott D.C."/>
            <person name="Rhee D.Y."/>
            <person name="Duda D.M."/>
            <person name="Kelsall I.R."/>
            <person name="Olszewski J.L."/>
            <person name="Paulo J.A."/>
            <person name="de Jong A."/>
            <person name="Ovaa H."/>
            <person name="Alpi A.F."/>
            <person name="Harper J.W."/>
            <person name="Schulman B.A."/>
        </authorList>
    </citation>
    <scope>FUNCTION</scope>
    <scope>INTERACTION WITH ARIH1</scope>
    <scope>NEDDYLATION</scope>
</reference>
<reference key="46">
    <citation type="journal article" date="2016" name="J. Cell Sci.">
        <title>Characterization of the mammalian family of DCN-type NEDD8 E3 ligases.</title>
        <authorList>
            <person name="Keuss M.J."/>
            <person name="Thomas Y."/>
            <person name="Mcarthur R."/>
            <person name="Wood N.T."/>
            <person name="Knebel A."/>
            <person name="Kurz T."/>
        </authorList>
    </citation>
    <scope>INTERACTION WITH DCUN1D1; DCUN1D2; DCUN1D3; DCUN1D4 AND DCUN1D5</scope>
</reference>
<reference key="47">
    <citation type="journal article" date="2016" name="Nat. Commun.">
        <title>SCF(Cyclin F)-dependent degradation of CDC6 suppresses DNA re-replication.</title>
        <authorList>
            <person name="Walter D."/>
            <person name="Hoffmann S."/>
            <person name="Komseli E.S."/>
            <person name="Rappsilber J."/>
            <person name="Gorgoulis V."/>
            <person name="Soerensen C.S."/>
        </authorList>
    </citation>
    <scope>INTERACTION WITH CCNF</scope>
</reference>
<reference key="48">
    <citation type="journal article" date="2017" name="Mol. Cell">
        <title>NOTCH2 Hajdu-Cheney mutations escape SCFFBW7-dependent proteolysis to promote osteoporosis.</title>
        <authorList>
            <person name="Fukushima H."/>
            <person name="Shimizu K."/>
            <person name="Watahiki A."/>
            <person name="Hoshikawa S."/>
            <person name="Kosho T."/>
            <person name="Oba D."/>
            <person name="Sakano S."/>
            <person name="Arakaki M."/>
            <person name="Yamada A."/>
            <person name="Nagashima K."/>
            <person name="Okabe K."/>
            <person name="Fukumoto S."/>
            <person name="Jimi E."/>
            <person name="Bigas A."/>
            <person name="Nakayama K.I."/>
            <person name="Nakayama K."/>
            <person name="Aoki Y."/>
            <person name="Wei W."/>
            <person name="Inuzuka H."/>
        </authorList>
    </citation>
    <scope>INTERACTION WITH NOTCH2</scope>
</reference>
<reference key="49">
    <citation type="journal article" date="2017" name="PLoS Pathog.">
        <title>Multiple UBXN family members inhibit retrovirus and lentivirus production and canonical NFkappaBeta signaling by stabilizing IkappaBalpha.</title>
        <authorList>
            <person name="Hu Y."/>
            <person name="O'Boyle K."/>
            <person name="Auer J."/>
            <person name="Raju S."/>
            <person name="You F."/>
            <person name="Wang P."/>
            <person name="Fikrig E."/>
            <person name="Sutton R.E."/>
        </authorList>
    </citation>
    <scope>INTERACTION WITH UBXN1</scope>
</reference>
<reference key="50">
    <citation type="journal article" date="2018" name="J. Virol.">
        <title>Vaccinia Virus C9 Ankyrin Repeat/F-Box Protein Is a Newly Identified Antagonist of the Type I Interferon-Induced Antiviral State.</title>
        <authorList>
            <person name="Liu R."/>
            <person name="Moss B."/>
        </authorList>
    </citation>
    <scope>INTERACTION WITH VACCINIA VIRUS PROTEIN C9L (MICROBIAL INFECTION)</scope>
</reference>
<reference key="51">
    <citation type="journal article" date="2019" name="J. Biol. Chem.">
        <title>The tumor suppressor FBXO31 preserves genomic integrity by regulating DNA replication and segregation through precise control of cyclin A levels.</title>
        <authorList>
            <person name="Dutta P."/>
            <person name="Islam S."/>
            <person name="Choppara S."/>
            <person name="Sengupta P."/>
            <person name="Kumar A."/>
            <person name="Kumar A."/>
            <person name="Wani M.R."/>
            <person name="Chatterjee S."/>
            <person name="Santra M.K."/>
        </authorList>
    </citation>
    <scope>IDENTIFICATION IN A SCF PROTEIN LIGASE COMPLEX</scope>
</reference>
<reference key="52">
    <citation type="journal article" date="2021" name="J. Virol.">
        <title>Suppression of JAK-STAT Signaling by Epstein-Barr Virus Tegument Protein BGLF2 through Recruitment of SHP1 Phosphatase and Promotion of STAT2 Degradation.</title>
        <authorList>
            <person name="Jangra S."/>
            <person name="Bharti A."/>
            <person name="Lui W.Y."/>
            <person name="Chaudhary V."/>
            <person name="Botelho M.G."/>
            <person name="Yuen K.S."/>
            <person name="Jin D.Y."/>
        </authorList>
    </citation>
    <scope>INTERACTION WITH EPSTEIN-BARR VIRUS TEGUMENT PROTEIN BGLF2 (MICROBIAL INFECTION)</scope>
</reference>
<reference key="53">
    <citation type="journal article" date="2022" name="Nat. Struct. Mol. Biol.">
        <title>Structure of CRL7FBXW8 reveals coupling with CUL1-RBX1/ROC1 for multi-cullin-RING E3-catalyzed ubiquitin ligation.</title>
        <authorList>
            <person name="Hopf L.V.M."/>
            <person name="Baek K."/>
            <person name="Kluegel M."/>
            <person name="von Gronau S."/>
            <person name="Xiong Y."/>
            <person name="Schulman B.A."/>
        </authorList>
    </citation>
    <scope>FUNCTION</scope>
    <scope>INTERACTION WITH CUL7</scope>
    <scope>MUTAGENESIS OF 1-MET--ASP-331</scope>
</reference>
<reference key="54">
    <citation type="journal article" date="2024" name="Nat. Commun.">
        <title>The phosphatase DUSP22 inhibits UBR2-mediated K63-ubiquitination and activation of Lck downstream of TCR signalling.</title>
        <authorList>
            <person name="Shih Y.C."/>
            <person name="Chen H.F."/>
            <person name="Wu C.Y."/>
            <person name="Ciou Y.R."/>
            <person name="Wang C.W."/>
            <person name="Chuang H.C."/>
            <person name="Tan T.H."/>
        </authorList>
    </citation>
    <scope>FUNCTION</scope>
    <scope>INTERACTION WITH UBR2</scope>
</reference>
<reference key="55">
    <citation type="journal article" date="2024" name="Nat. Struct. Mol. Biol.">
        <title>Mechanism of millisecond Lys48-linked poly-ubiquitin chain formation by cullin-RING ligases.</title>
        <authorList>
            <person name="Liwocha J."/>
            <person name="Li J."/>
            <person name="Purser N."/>
            <person name="Rattanasopa C."/>
            <person name="Maiwald S."/>
            <person name="Krist D.T."/>
            <person name="Scott D.C."/>
            <person name="Steigenberger B."/>
            <person name="Prabu J.R."/>
            <person name="Schulman B.A."/>
            <person name="Kleiger G."/>
        </authorList>
    </citation>
    <scope>FUNCTION</scope>
    <scope>PATHWAY</scope>
    <scope>SUBUNIT</scope>
    <scope>DOMAIN</scope>
    <scope>NEDDYLATION</scope>
</reference>
<reference key="56">
    <citation type="journal article" date="2025" name="Nature">
        <title>C-terminal amides mark proteins for degradation via SCF-FBXO31.</title>
        <authorList>
            <person name="Muhar M.F."/>
            <person name="Farnung J."/>
            <person name="Cernakova M."/>
            <person name="Hofmann R."/>
            <person name="Henneberg L.T."/>
            <person name="Pfleiderer M.M."/>
            <person name="Denoth-Lippuner A."/>
            <person name="Kalcic F."/>
            <person name="Nievergelt A.S."/>
            <person name="Peters Al-Bayati M."/>
            <person name="Sidiropoulos N.D."/>
            <person name="Beier V."/>
            <person name="Mann M."/>
            <person name="Jessberger S."/>
            <person name="Jinek M."/>
            <person name="Schulman B.A."/>
            <person name="Bode J.W."/>
            <person name="Corn J.E."/>
        </authorList>
    </citation>
    <scope>FUNCTION</scope>
    <scope>IDENTIFICATION IN THE SCF(FBXO31) UBIQUITIN LIGASE COMPLEX</scope>
</reference>
<reference evidence="57 58" key="57">
    <citation type="journal article" date="2002" name="Nature">
        <title>Structure of the Cul1-Rbx1-Skp1-F box Skp2 SCF ubiquitin ligase complex.</title>
        <authorList>
            <person name="Zheng N."/>
            <person name="Schulman B.A."/>
            <person name="Song L."/>
            <person name="Miller J.J."/>
            <person name="Jeffrey P.D."/>
            <person name="Wang P."/>
            <person name="Chu C."/>
            <person name="Koepp D.M."/>
            <person name="Elledge S.J."/>
            <person name="Pagano M."/>
            <person name="Conaway R.C."/>
            <person name="Conaway J.W."/>
            <person name="Harper J.W."/>
            <person name="Pavletich N.P."/>
        </authorList>
    </citation>
    <scope>X-RAY CRYSTALLOGRAPHY (3.0 ANGSTROMS) OF 17-776 IN COMPLEX WITH 19-108 OF RBX1</scope>
    <scope>X-RAY CRYSTALLOGRAPHY (3.0 ANGSTROMS) IN SCF COMPLEX WITH RBX1; SKP1 AND SKP2</scope>
</reference>
<reference evidence="59" key="58">
    <citation type="journal article" date="2004" name="Cell">
        <title>Structure of the Cand1-Cul1-Roc1 complex reveals regulatory mechanisms for the assembly of the multisubunit cullin-dependent ubiquitin ligases.</title>
        <authorList>
            <person name="Goldenberg S.J."/>
            <person name="Cascio T.C."/>
            <person name="Shumway S.D."/>
            <person name="Garbutt K.C."/>
            <person name="Liu J."/>
            <person name="Xiong Y."/>
            <person name="Zheng N."/>
        </authorList>
    </citation>
    <scope>X-RAY CRYSTALLOGRAPHY (3.1 ANGSTROMS) IN COMPLEX WITH CAND1 AND ROC1</scope>
    <scope>NEDDYLATION AT LYS-720</scope>
    <scope>SUBUNIT</scope>
</reference>
<reference evidence="60 61" key="59">
    <citation type="journal article" date="2011" name="Science">
        <title>N-terminal acetylation acts as an avidity enhancer within an interconnected multiprotein complex.</title>
        <authorList>
            <person name="Scott D.C."/>
            <person name="Monda J.K."/>
            <person name="Bennett E.J."/>
            <person name="Harper J.W."/>
            <person name="Schulman B.A."/>
        </authorList>
    </citation>
    <scope>X-RAY CRYSTALLOGRAPHY (1.5 ANGSTROMS) OF 702-776 IN COMPLEX WITH DCUN1D1 AND UBE2M</scope>
</reference>
<reference evidence="62" key="60">
    <citation type="journal article" date="2012" name="Mol. Cell">
        <title>Structure of a glomulin-RBX1-CUL1 complex: inhibition of a RING E3 ligase through masking of its E2-binding surface.</title>
        <authorList>
            <person name="Duda D.M."/>
            <person name="Olszewski J.L."/>
            <person name="Tron A.E."/>
            <person name="Hammel M."/>
            <person name="Lambert L.J."/>
            <person name="Waddell M.B."/>
            <person name="Mittag T."/>
            <person name="DeCaprio J.A."/>
            <person name="Schulman B.A."/>
        </authorList>
    </citation>
    <scope>X-RAY CRYSTALLOGRAPHY (3.00 ANGSTROMS) OF 411-690 IN COMPLEX WITH RBX1 AND GLMN</scope>
    <scope>SUBUNIT</scope>
</reference>
<reference evidence="63" key="61">
    <citation type="journal article" date="2017" name="Nat. Chem. Biol.">
        <title>Blocking an N-terminal acetylation-dependent protein interaction inhibits an E3 ligase.</title>
        <authorList>
            <person name="Scott D.C."/>
            <person name="Hammill J.T."/>
            <person name="Min J."/>
            <person name="Rhee D.Y."/>
            <person name="Connelly M."/>
            <person name="Sviderskiy V.O."/>
            <person name="Bhasin D."/>
            <person name="Chen Y."/>
            <person name="Ong S.S."/>
            <person name="Chai S.C."/>
            <person name="Goktug A.N."/>
            <person name="Huang G."/>
            <person name="Monda J.K."/>
            <person name="Low J."/>
            <person name="Kim H.S."/>
            <person name="Paulo J.A."/>
            <person name="Cannon J.R."/>
            <person name="Shelat A.A."/>
            <person name="Chen T."/>
            <person name="Kelsall I.R."/>
            <person name="Alpi A.F."/>
            <person name="Pagala V."/>
            <person name="Wang X."/>
            <person name="Peng J."/>
            <person name="Singh B."/>
            <person name="Harper J.W."/>
            <person name="Schulman B.A."/>
            <person name="Guy R.K."/>
        </authorList>
    </citation>
    <scope>X-RAY CRYSTALLOGRAPHY (1.55 ANGSTROMS) OF 702-776 IN COMPLEX WITH DCUN1D4</scope>
</reference>
<protein>
    <recommendedName>
        <fullName>Cullin-1</fullName>
        <shortName>CUL-1</shortName>
    </recommendedName>
</protein>
<comment type="function">
    <text evidence="14 16 22 24 28 29 30 31 34 35 40 41 44 51 52 53 54 55">Core component of multiple cullin-RING-based SCF (SKP1-CUL1-F-box protein) E3 ubiquitin-protein ligase complexes, which mediate the ubiquitination of proteins involved in cell cycle progression, signal transduction and transcription. SCF complexes and ARIH1 collaborate in tandem to mediate ubiquitination of target proteins (PubMed:22017875, PubMed:22017877, PubMed:27565346). In the SCF complex, serves as a rigid scaffold that organizes the SKP1-F-box protein and RBX1 subunits. May contribute to catalysis through positioning of the substrate and the ubiquitin-conjugating enzyme (PubMed:38326650). The E3 ubiquitin-protein ligase activity of the complex is dependent on the neddylation of the cullin subunit and exchange of the substrate recognition component is mediated by TIP120A/CAND1 (PubMed:12609982, PubMed:38326650). The functional specificity of the SCF complex depends on the F-box protein as substrate recognition component (PubMed:38326650). SCF(BTRC) and SCF(FBXW11) direct ubiquitination of CTNNB1 and participate in Wnt signaling. SCF(FBXW11) directs ubiquitination of phosphorylated NFKBIA. SCF(BTRC) directs ubiquitination of NFKBIB, NFKBIE, ATF4, SMAD3, SMAD4, CDC25A, FBXO5 and probably NFKB2. SCF(BTRC) and/or SCF(FBXW11) direct ubiquitination of CEP68 (PubMed:25503564, PubMed:25704143). SCF(SKP2) directs ubiquitination of phosphorylated CDKN1B/p27kip and is involved in regulation of G1/S transition. SCF(SKP2) directs ubiquitination of ORC1, CDT1, RBL2, ELF4, CDKN1A, RAG2, FOXO1A, and probably MYC and TAL1. SCF(FBXW7) directs ubiquitination of CCNE1, NOTCH1 released notch intracellular domain (NICD), and probably PSEN1. SCF(FBXW2) directs ubiquitination of GCM1. SCF(FBXO32) directs ubiquitination of MYOD1. SCF(FBXO7) directs ubiquitination of BIRC2 and DLGAP5. SCF(FBXO33) directs ubiquitination of YBX1. SCF(FBXO1) directs ubiquitination of BCL6 and DTL but does not seem to direct ubiquitination of TP53. SCF(BTRC) mediates the ubiquitination of NFKBIA at 'Lys-21' and 'Lys-22'; the degradation frees the associated NFKB1-RELA dimer to translocate into the nucleus and to activate transcription. SCF(CCNF) directs ubiquitination of CCP110. SCF(FBXL3) and SCF(FBXL21) direct ubiquitination of CRY1 and CRY2. SCF(FBXO9) directs ubiquitination of TTI1 and TELO2. SCF(FBXO10) directs ubiquitination of BCL2. Neddylated CUL1-RBX1 ubiquitinates p53/TP53 recruited by Cul7-RING(FBXW8) complex (PubMed:35982156). SCF(BTRC) directs 'Lys-48'-linked ubiquitination of UBR2 in the T-cell receptor signaling pathway (PubMed:38225265). The SCF(FBXO31) protein ligase complex specifically mediates the ubiquitination of proteins amidated at their C-terminus in response to oxidative stress (PubMed:39880951).</text>
</comment>
<comment type="pathway">
    <text evidence="28 29 31 53 54">Protein modification; protein ubiquitination.</text>
</comment>
<comment type="subunit">
    <text evidence="1 4 5 8 9 10 11 12 13 14 15 16 17 18 19 20 21 22 25 26 27 28 29 30 31 32 33 34 35 36 37 38 39 40 42 43 44 45 46 47 49 51 52 53 54">Component of multiple Cul1-RING E3 ubiquitin-protein ligase complexes commonly known as SCF (SKP1-CUL1-F-box) complexes, consisting of CUL1, SKP1, RBX1 and a variable F-box domain-containing protein as substrate-specific subunit (PubMed:10230406, PubMed:11961546, PubMed:15145941, PubMed:15531760, PubMed:16714087, PubMed:16797541, PubMed:17098746, PubMed:18203720, PubMed:20596027, PubMed:22113614, PubMed:22405651, PubMed:22748924, PubMed:23263282, PubMed:23431138, PubMed:25503564, PubMed:31413110, PubMed:38326650, PubMed:39880951). Component of the SCF(FBXW11) complex containing FBXW11. Component of the SCF(SKP2) complex containing SKP2, in which it interacts directly with SKP1, SKP2 and RBX1. Component of the SCF(FBXW2) complex containing FBXW2. Component of the SCF(FBXO32) complex containing FBXO32. Component of the probable SCF(FBXO7) complex containing FBXO7. Component of the SCF(FBXO10) complex containing FBXO10. Component of the SCF(FBXO11) complex containing FBXO11. Component of the SCF(FBXO25) complex containing FBXO25. Component of the SCF(FBXO33) complex containing FBXO33. Component of the probable SCF(FBXO4) complex containing FBXO4. Component of the SCF(FBXO44) complex, composed of SKP1, CUL1 and FBXO44. Component of the SCF(BTRC) complex, composed of SKP1, CUL1 and BTRC (PubMed:22017875, PubMed:22017877). This complex binds phosphorylated NFKBIA. Part of a SCF complex consisting of CUL1, RBX1, SKP1 and FBXO2. Component of a SCF(SKP2)-like complex containing CUL1, SKP1, TRIM21 and SKP2. Component of the SCF(FBXO17) complex, composed of SKP1, CUL1 and FBXO17. Component of the SCF(FBXO27) complex, composed of SKP1, CUL1 and FBXO27. Component of the SCF(CCNF) complex consisting of CUL1, RBX1, SKP1 and CCNF (PubMed:20596027). Interacts with CCNF (PubMed:26818844). Component of the SCF(FBXL3) complex composed of CUL1, SKP1, RBX1 and FBXL3. Component of the SCF(FBXL21) complex composed of CUL1, SKP1, RBX1 and FBXL21. Component of the SCF(FBXO9) composed of CUL1, SKP1, RBX1 and FBXO9. Component of the SCF(FBXW7) composed of CUL1, SKP1, RBX1 and FBXW7 (PubMed:22405651). Component of the SCF(FBXO31) complex composed of CUL1, SKP1, RBX1 and FBXO31 (PubMed:39880951). Interacts with CHEK2; mediates CHEK2 ubiquitination and regulates its function. Part of a complex with TIP120A/CAND1 and RBX1. The unneddylated form interacts with TIP120A/CAND1 and the interaction mediates the exchange of the F-box substrate-specific subunit. Can self-associate. Interacts with FBXW8. Interacts with RNF7. Interacts with TRIM21. Interacts with COPS2. Interacts with UBE2M (PubMed:21940857). Identified in a complex with RBX1 and GLMN (PubMed:22405651, PubMed:22748924). Interacts with CEP68 as part of the SCF(FBXW11) complex; the interaction is probably mediated by FBXW11 and the complex also contains CDK5RAP2 and PCNT (PubMed:25503564). Interacts (when neddylated) with ARIH1; leading to activate the E3 ligase activity of ARIH1 (PubMed:24076655, PubMed:27565346). Interacts with COPS9 isoform 2 (PubMed:23776465). Interacts with UBXN1 (PubMed:28152074). Interacts with KAT7, probably as part of an SCF complex; the interaction mediates KAT7 ubiquitination (By similarity). Interacts with NOTCH2 (PubMed:29149593). Part of a complex that contains DCUN1D5, CUL1 and RBX1; this complex is bridged by CUL1 (PubMed:24192928). Interacts (unneddylated form) with DCUN1D1, DCUN1D2, DCUN1D3, DCUN1D4 and DCUN1D5; these interactions promote the cullin neddylation (PubMed:21940857, PubMed:23201271, PubMed:24192928, PubMed:25349211, PubMed:26906416, PubMed:28581483). Interacts (via the C-terminal domain) with CUL7; the interaction seems to be mediated by FBXW8; it is likely specific to FBXW8, but not other F-box proteins (PubMed:35982156). Interacts with UBR2, as part of SCF(BTRC) complex; the interaction mediates 'Lys-48'-linked ubiquitination of UBR2 and is regulated by DUSP22 in the T-cell receptor signaling pathway (PubMed:38225265).</text>
</comment>
<comment type="subunit">
    <text evidence="25">(Microbial infection) Interacts with Epstein-Barr virus BPLF1.</text>
</comment>
<comment type="subunit">
    <text evidence="24">(Microbial infection) Interacts with Human adenovirus early E1A protein; this interaction inhibits RBX1-CUL1-dependent elongation reaction of ubiquitin chains by the SCF(FBXW7) complex.</text>
</comment>
<comment type="subunit">
    <text evidence="48">(Microbial infection) Interacts with vaccinia virus protein C9L.</text>
</comment>
<comment type="subunit">
    <text evidence="50">(Microbial infection) Interacts with Epstein-Barr virus (EBV) tegument protein BGLF2; this interaction might facilitate CUL1 recruitment to STAT2, leading to ubiquitination and degradation of the latter.</text>
</comment>
<comment type="interaction">
    <interactant intactId="EBI-359390">
        <id>Q13616</id>
    </interactant>
    <interactant intactId="EBI-2514233">
        <id>Q9Y4X5</id>
        <label>ARIH1</label>
    </interactant>
    <organismsDiffer>false</organismsDiffer>
    <experiments>9</experiments>
</comment>
<comment type="interaction">
    <interactant intactId="EBI-359390">
        <id>Q13616</id>
    </interactant>
    <interactant intactId="EBI-307461">
        <id>Q9Y297</id>
        <label>BTRC</label>
    </interactant>
    <organismsDiffer>false</organismsDiffer>
    <experiments>13</experiments>
</comment>
<comment type="interaction">
    <interactant intactId="EBI-359390">
        <id>Q13616</id>
    </interactant>
    <interactant intactId="EBI-456077">
        <id>Q86VP6</id>
        <label>CAND1</label>
    </interactant>
    <organismsDiffer>false</organismsDiffer>
    <experiments>33</experiments>
</comment>
<comment type="interaction">
    <interactant intactId="EBI-359390">
        <id>Q13616</id>
    </interactant>
    <interactant intactId="EBI-3943153">
        <id>O60826</id>
        <label>CCDC22</label>
    </interactant>
    <organismsDiffer>false</organismsDiffer>
    <experiments>3</experiments>
</comment>
<comment type="interaction">
    <interactant intactId="EBI-359390">
        <id>Q13616</id>
    </interactant>
    <interactant intactId="EBI-1207574">
        <id>P41002</id>
        <label>CCNF</label>
    </interactant>
    <organismsDiffer>false</organismsDiffer>
    <experiments>5</experiments>
</comment>
<comment type="interaction">
    <interactant intactId="EBI-359390">
        <id>Q13616</id>
    </interactant>
    <interactant intactId="EBI-1049189">
        <id>Q8ND76</id>
        <label>CCNY</label>
    </interactant>
    <organismsDiffer>false</organismsDiffer>
    <experiments>3</experiments>
</comment>
<comment type="interaction">
    <interactant intactId="EBI-359390">
        <id>Q13616</id>
    </interactant>
    <interactant intactId="EBI-975634">
        <id>P49427</id>
        <label>CDC34</label>
    </interactant>
    <organismsDiffer>false</organismsDiffer>
    <experiments>3</experiments>
</comment>
<comment type="interaction">
    <interactant intactId="EBI-359390">
        <id>Q13616</id>
    </interactant>
    <interactant intactId="EBI-519280">
        <id>P46527</id>
        <label>CDKN1B</label>
    </interactant>
    <organismsDiffer>false</organismsDiffer>
    <experiments>2</experiments>
</comment>
<comment type="interaction">
    <interactant intactId="EBI-359390">
        <id>Q13616</id>
    </interactant>
    <interactant intactId="EBI-349854">
        <id>P13569</id>
        <label>CFTR</label>
    </interactant>
    <organismsDiffer>false</organismsDiffer>
    <experiments>7</experiments>
</comment>
<comment type="interaction">
    <interactant intactId="EBI-359390">
        <id>Q13616</id>
    </interactant>
    <interactant intactId="EBI-2510157">
        <id>Q96EF6</id>
        <label>FBXO17</label>
    </interactant>
    <organismsDiffer>false</organismsDiffer>
    <experiments>10</experiments>
</comment>
<comment type="interaction">
    <interactant intactId="EBI-359390">
        <id>Q13616</id>
    </interactant>
    <interactant intactId="EBI-2510137">
        <id>Q8NEZ5</id>
        <label>FBXO22</label>
    </interactant>
    <organismsDiffer>false</organismsDiffer>
    <experiments>4</experiments>
</comment>
<comment type="interaction">
    <interactant intactId="EBI-359390">
        <id>Q13616</id>
    </interactant>
    <interactant intactId="EBI-2509901">
        <id>Q9UK99</id>
        <label>FBXO3</label>
    </interactant>
    <organismsDiffer>false</organismsDiffer>
    <experiments>9</experiments>
</comment>
<comment type="interaction">
    <interactant intactId="EBI-359390">
        <id>Q13616</id>
    </interactant>
    <interactant intactId="EBI-8555452">
        <id>Q7Z6M2</id>
        <label>FBXO33</label>
    </interactant>
    <organismsDiffer>false</organismsDiffer>
    <experiments>2</experiments>
</comment>
<comment type="interaction">
    <interactant intactId="EBI-359390">
        <id>Q13616</id>
    </interactant>
    <interactant intactId="EBI-960409">
        <id>Q9UKT5</id>
        <label>FBXO4</label>
    </interactant>
    <organismsDiffer>false</organismsDiffer>
    <experiments>5</experiments>
</comment>
<comment type="interaction">
    <interactant intactId="EBI-359390">
        <id>Q13616</id>
    </interactant>
    <interactant intactId="EBI-3938499">
        <id>Q9NRD1</id>
        <label>FBXO6</label>
    </interactant>
    <organismsDiffer>false</organismsDiffer>
    <experiments>5</experiments>
</comment>
<comment type="interaction">
    <interactant intactId="EBI-359390">
        <id>Q13616</id>
    </interactant>
    <interactant intactId="EBI-355189">
        <id>Q9UKB1</id>
        <label>FBXW11</label>
    </interactant>
    <organismsDiffer>false</organismsDiffer>
    <experiments>11</experiments>
</comment>
<comment type="interaction">
    <interactant intactId="EBI-359390">
        <id>Q13616</id>
    </interactant>
    <interactant intactId="EBI-914727">
        <id>Q9UKT8</id>
        <label>FBXW2</label>
    </interactant>
    <organismsDiffer>false</organismsDiffer>
    <experiments>5</experiments>
</comment>
<comment type="interaction">
    <interactant intactId="EBI-359390">
        <id>Q13616</id>
    </interactant>
    <interactant intactId="EBI-359574">
        <id>Q969H0</id>
        <label>FBXW7</label>
    </interactant>
    <organismsDiffer>false</organismsDiffer>
    <experiments>9</experiments>
</comment>
<comment type="interaction">
    <interactant intactId="EBI-359390">
        <id>Q13616</id>
    </interactant>
    <interactant intactId="EBI-352572">
        <id>P08238</id>
        <label>HSP90AB1</label>
    </interactant>
    <organismsDiffer>false</organismsDiffer>
    <experiments>2</experiments>
</comment>
<comment type="interaction">
    <interactant intactId="EBI-359390">
        <id>Q13616</id>
    </interactant>
    <interactant intactId="EBI-389668">
        <id>Q00987</id>
        <label>MDM2</label>
    </interactant>
    <organismsDiffer>false</organismsDiffer>
    <experiments>3</experiments>
</comment>
<comment type="interaction">
    <interactant intactId="EBI-359390">
        <id>Q13616</id>
    </interactant>
    <interactant intactId="EBI-394624">
        <id>O75586</id>
        <label>MED6</label>
    </interactant>
    <organismsDiffer>false</organismsDiffer>
    <experiments>2</experiments>
</comment>
<comment type="interaction">
    <interactant intactId="EBI-359390">
        <id>Q13616</id>
    </interactant>
    <interactant intactId="EBI-716247">
        <id>Q15843</id>
        <label>NEDD8</label>
    </interactant>
    <organismsDiffer>false</organismsDiffer>
    <experiments>23</experiments>
</comment>
<comment type="interaction">
    <interactant intactId="EBI-359390">
        <id>Q13616</id>
    </interactant>
    <interactant intactId="EBI-398523">
        <id>P62877</id>
        <label>RBX1</label>
    </interactant>
    <organismsDiffer>false</organismsDiffer>
    <experiments>31</experiments>
</comment>
<comment type="interaction">
    <interactant intactId="EBI-359390">
        <id>Q13616</id>
    </interactant>
    <interactant intactId="EBI-307486">
        <id>P63208</id>
        <label>SKP1</label>
    </interactant>
    <organismsDiffer>false</organismsDiffer>
    <experiments>20</experiments>
</comment>
<comment type="interaction">
    <interactant intactId="EBI-359390">
        <id>Q13616</id>
    </interactant>
    <interactant intactId="EBI-456291">
        <id>Q13309</id>
        <label>SKP2</label>
    </interactant>
    <organismsDiffer>false</organismsDiffer>
    <experiments>15</experiments>
</comment>
<comment type="interaction">
    <interactant intactId="EBI-359390">
        <id>Q13616</id>
    </interactant>
    <interactant intactId="EBI-1041660">
        <id>P61081</id>
        <label>UBE2M</label>
    </interactant>
    <organismsDiffer>false</organismsDiffer>
    <experiments>5</experiments>
</comment>
<comment type="interaction">
    <interactant intactId="EBI-359390">
        <id>Q13616</id>
    </interactant>
    <interactant intactId="EBI-1993627">
        <id>O94888</id>
        <label>UBXN7</label>
    </interactant>
    <organismsDiffer>false</organismsDiffer>
    <experiments>8</experiments>
</comment>
<comment type="interaction">
    <interactant intactId="EBI-359390">
        <id>Q13616</id>
    </interactant>
    <interactant intactId="EBI-354065">
        <id>P67809</id>
        <label>YBX1</label>
    </interactant>
    <organismsDiffer>false</organismsDiffer>
    <experiments>2</experiments>
</comment>
<comment type="interaction">
    <interactant intactId="EBI-359390">
        <id>Q13616</id>
    </interactant>
    <interactant intactId="EBI-6898235">
        <id>Q8BFZ4</id>
        <label>Fbxl21</label>
    </interactant>
    <organismsDiffer>true</organismsDiffer>
    <experiments>3</experiments>
</comment>
<comment type="interaction">
    <interactant intactId="EBI-359390">
        <id>Q13616</id>
    </interactant>
    <interactant intactId="EBI-1266589">
        <id>Q8C4V4</id>
        <label>Fbxl3</label>
    </interactant>
    <organismsDiffer>true</organismsDiffer>
    <experiments>3</experiments>
</comment>
<comment type="interaction">
    <interactant intactId="EBI-359390">
        <id>Q13616</id>
    </interactant>
    <interactant intactId="EBI-6859930">
        <id>Q83730</id>
        <label>m005R</label>
    </interactant>
    <organismsDiffer>true</organismsDiffer>
    <experiments>5</experiments>
</comment>
<comment type="interaction">
    <interactant intactId="EBI-359390">
        <id>Q13616</id>
    </interactant>
    <interactant intactId="EBI-19772">
        <id>P52491</id>
        <label>UBC12</label>
    </interactant>
    <organismsDiffer>true</organismsDiffer>
    <experiments>2</experiments>
</comment>
<comment type="interaction">
    <interactant intactId="EBI-359390">
        <id>Q13616</id>
    </interactant>
    <interactant intactId="EBI-15718527">
        <id>Q6TVW2</id>
    </interactant>
    <organismsDiffer>true</organismsDiffer>
    <experiments>5</experiments>
</comment>
<comment type="tissue specificity">
    <text evidence="55">Expressed in lung fibroblasts.</text>
</comment>
<comment type="domain">
    <text evidence="53">The Cullin neddylation domain restrains the RING domain of RBX1 in the E3 ubiquitin-protein ligase complex; this restraint is removed upon neddylation of the cullin.</text>
</comment>
<comment type="PTM">
    <text evidence="6 7 15 23 37 44 53">Neddylated; which enhances the ubiquitination activity of SCF (PubMed:24076655, PubMed:27565346, PubMed:15537541). Neddylation prevents binding of the inhibitor CAND1 (PubMed:15537541). Neddylation leads to structural rearrangment in the complex that allows interaction between the E2 ubiquitin-conjugating enzyme and the acceptor ubiquitin (PubMed:38326650). Deneddylated via its interaction with the COP9 signalosome (CSN) complex (PubMed:10597293, PubMed:10713156, PubMed:15537541, PubMed:18805092).</text>
</comment>
<comment type="PTM">
    <text evidence="25">(Microbial infection) Deneddylated by Epstein-Barr virus BPLF1 leading to a S-phase-like environment that is required for efficient replication of the viral genome (PubMed:20190741).</text>
</comment>
<comment type="similarity">
    <text evidence="3">Belongs to the cullin family.</text>
</comment>
<gene>
    <name type="primary">CUL1</name>
</gene>